<name>TITIN_DROME</name>
<keyword id="KW-0025">Alternative splicing</keyword>
<keyword id="KW-0131">Cell cycle</keyword>
<keyword id="KW-0132">Cell division</keyword>
<keyword id="KW-0158">Chromosome</keyword>
<keyword id="KW-0175">Coiled coil</keyword>
<keyword id="KW-0963">Cytoplasm</keyword>
<keyword id="KW-0217">Developmental protein</keyword>
<keyword id="KW-1015">Disulfide bond</keyword>
<keyword id="KW-0393">Immunoglobulin domain</keyword>
<keyword id="KW-0498">Mitosis</keyword>
<keyword id="KW-0514">Muscle protein</keyword>
<keyword id="KW-0539">Nucleus</keyword>
<keyword id="KW-1185">Reference proteome</keyword>
<keyword id="KW-0677">Repeat</keyword>
<keyword id="KW-0728">SH3 domain</keyword>
<keyword id="KW-0802">TPR repeat</keyword>
<reference evidence="19 24" key="1">
    <citation type="journal article" date="2000" name="J. Cell Biol.">
        <title>Requirements of Kettin, a giant muscle protein highly conserved in overall structure in evolution, for normal muscle function, viability, and flight activity of Drosophila.</title>
        <authorList>
            <person name="Hakeda S."/>
            <person name="Endo S."/>
            <person name="Saigo K."/>
        </authorList>
    </citation>
    <scope>NUCLEOTIDE SEQUENCE [MRNA] (ISOFORM A)</scope>
    <scope>FUNCTION</scope>
    <scope>TISSUE SPECIFICITY</scope>
</reference>
<reference evidence="19 27" key="2">
    <citation type="journal article" date="2000" name="J. Cell Sci.">
        <title>Drosophila D-titin is required for myoblast fusion and skeletal muscle striation.</title>
        <authorList>
            <person name="Zhang Y."/>
            <person name="Featherstone D."/>
            <person name="Davis W."/>
            <person name="Rushton E."/>
            <person name="Broadie K."/>
        </authorList>
    </citation>
    <scope>NUCLEOTIDE SEQUENCE [GENOMIC DNA] (ISOFORM D)</scope>
    <scope>NUCLEOTIDE SEQUENCE [GENOMIC DNA] OF 1-187</scope>
    <scope>NUCLEOTIDE SEQUENCE [MRNA] OF 4789-4963 AND 13411-13939 (ISOFORMS B/C/D/E)</scope>
    <scope>NUCLEOTIDE SEQUENCE [GENOMIC DNA] OF 15913-16691 (ISOFORM E)</scope>
    <scope>NUCLEOTIDE SEQUENCE [MRNA] OF 18064-18141 (ISOFORMS C/D/E)</scope>
    <scope>FUNCTION</scope>
    <scope>TISSUE SPECIFICITY</scope>
    <source>
        <strain evidence="9">Berkeley</strain>
        <strain>Oregon-R</strain>
        <tissue evidence="28">Embryo</tissue>
        <tissue evidence="28">Larva</tissue>
        <tissue evidence="9">Ovary</tissue>
    </source>
</reference>
<reference evidence="21" key="3">
    <citation type="journal article" date="2000" name="Science">
        <title>The genome sequence of Drosophila melanogaster.</title>
        <authorList>
            <person name="Adams M.D."/>
            <person name="Celniker S.E."/>
            <person name="Holt R.A."/>
            <person name="Evans C.A."/>
            <person name="Gocayne J.D."/>
            <person name="Amanatides P.G."/>
            <person name="Scherer S.E."/>
            <person name="Li P.W."/>
            <person name="Hoskins R.A."/>
            <person name="Galle R.F."/>
            <person name="George R.A."/>
            <person name="Lewis S.E."/>
            <person name="Richards S."/>
            <person name="Ashburner M."/>
            <person name="Henderson S.N."/>
            <person name="Sutton G.G."/>
            <person name="Wortman J.R."/>
            <person name="Yandell M.D."/>
            <person name="Zhang Q."/>
            <person name="Chen L.X."/>
            <person name="Brandon R.C."/>
            <person name="Rogers Y.-H.C."/>
            <person name="Blazej R.G."/>
            <person name="Champe M."/>
            <person name="Pfeiffer B.D."/>
            <person name="Wan K.H."/>
            <person name="Doyle C."/>
            <person name="Baxter E.G."/>
            <person name="Helt G."/>
            <person name="Nelson C.R."/>
            <person name="Miklos G.L.G."/>
            <person name="Abril J.F."/>
            <person name="Agbayani A."/>
            <person name="An H.-J."/>
            <person name="Andrews-Pfannkoch C."/>
            <person name="Baldwin D."/>
            <person name="Ballew R.M."/>
            <person name="Basu A."/>
            <person name="Baxendale J."/>
            <person name="Bayraktaroglu L."/>
            <person name="Beasley E.M."/>
            <person name="Beeson K.Y."/>
            <person name="Benos P.V."/>
            <person name="Berman B.P."/>
            <person name="Bhandari D."/>
            <person name="Bolshakov S."/>
            <person name="Borkova D."/>
            <person name="Botchan M.R."/>
            <person name="Bouck J."/>
            <person name="Brokstein P."/>
            <person name="Brottier P."/>
            <person name="Burtis K.C."/>
            <person name="Busam D.A."/>
            <person name="Butler H."/>
            <person name="Cadieu E."/>
            <person name="Center A."/>
            <person name="Chandra I."/>
            <person name="Cherry J.M."/>
            <person name="Cawley S."/>
            <person name="Dahlke C."/>
            <person name="Davenport L.B."/>
            <person name="Davies P."/>
            <person name="de Pablos B."/>
            <person name="Delcher A."/>
            <person name="Deng Z."/>
            <person name="Mays A.D."/>
            <person name="Dew I."/>
            <person name="Dietz S.M."/>
            <person name="Dodson K."/>
            <person name="Doup L.E."/>
            <person name="Downes M."/>
            <person name="Dugan-Rocha S."/>
            <person name="Dunkov B.C."/>
            <person name="Dunn P."/>
            <person name="Durbin K.J."/>
            <person name="Evangelista C.C."/>
            <person name="Ferraz C."/>
            <person name="Ferriera S."/>
            <person name="Fleischmann W."/>
            <person name="Fosler C."/>
            <person name="Gabrielian A.E."/>
            <person name="Garg N.S."/>
            <person name="Gelbart W.M."/>
            <person name="Glasser K."/>
            <person name="Glodek A."/>
            <person name="Gong F."/>
            <person name="Gorrell J.H."/>
            <person name="Gu Z."/>
            <person name="Guan P."/>
            <person name="Harris M."/>
            <person name="Harris N.L."/>
            <person name="Harvey D.A."/>
            <person name="Heiman T.J."/>
            <person name="Hernandez J.R."/>
            <person name="Houck J."/>
            <person name="Hostin D."/>
            <person name="Houston K.A."/>
            <person name="Howland T.J."/>
            <person name="Wei M.-H."/>
            <person name="Ibegwam C."/>
            <person name="Jalali M."/>
            <person name="Kalush F."/>
            <person name="Karpen G.H."/>
            <person name="Ke Z."/>
            <person name="Kennison J.A."/>
            <person name="Ketchum K.A."/>
            <person name="Kimmel B.E."/>
            <person name="Kodira C.D."/>
            <person name="Kraft C.L."/>
            <person name="Kravitz S."/>
            <person name="Kulp D."/>
            <person name="Lai Z."/>
            <person name="Lasko P."/>
            <person name="Lei Y."/>
            <person name="Levitsky A.A."/>
            <person name="Li J.H."/>
            <person name="Li Z."/>
            <person name="Liang Y."/>
            <person name="Lin X."/>
            <person name="Liu X."/>
            <person name="Mattei B."/>
            <person name="McIntosh T.C."/>
            <person name="McLeod M.P."/>
            <person name="McPherson D."/>
            <person name="Merkulov G."/>
            <person name="Milshina N.V."/>
            <person name="Mobarry C."/>
            <person name="Morris J."/>
            <person name="Moshrefi A."/>
            <person name="Mount S.M."/>
            <person name="Moy M."/>
            <person name="Murphy B."/>
            <person name="Murphy L."/>
            <person name="Muzny D.M."/>
            <person name="Nelson D.L."/>
            <person name="Nelson D.R."/>
            <person name="Nelson K.A."/>
            <person name="Nixon K."/>
            <person name="Nusskern D.R."/>
            <person name="Pacleb J.M."/>
            <person name="Palazzolo M."/>
            <person name="Pittman G.S."/>
            <person name="Pan S."/>
            <person name="Pollard J."/>
            <person name="Puri V."/>
            <person name="Reese M.G."/>
            <person name="Reinert K."/>
            <person name="Remington K."/>
            <person name="Saunders R.D.C."/>
            <person name="Scheeler F."/>
            <person name="Shen H."/>
            <person name="Shue B.C."/>
            <person name="Siden-Kiamos I."/>
            <person name="Simpson M."/>
            <person name="Skupski M.P."/>
            <person name="Smith T.J."/>
            <person name="Spier E."/>
            <person name="Spradling A.C."/>
            <person name="Stapleton M."/>
            <person name="Strong R."/>
            <person name="Sun E."/>
            <person name="Svirskas R."/>
            <person name="Tector C."/>
            <person name="Turner R."/>
            <person name="Venter E."/>
            <person name="Wang A.H."/>
            <person name="Wang X."/>
            <person name="Wang Z.-Y."/>
            <person name="Wassarman D.A."/>
            <person name="Weinstock G.M."/>
            <person name="Weissenbach J."/>
            <person name="Williams S.M."/>
            <person name="Woodage T."/>
            <person name="Worley K.C."/>
            <person name="Wu D."/>
            <person name="Yang S."/>
            <person name="Yao Q.A."/>
            <person name="Ye J."/>
            <person name="Yeh R.-F."/>
            <person name="Zaveri J.S."/>
            <person name="Zhan M."/>
            <person name="Zhang G."/>
            <person name="Zhao Q."/>
            <person name="Zheng L."/>
            <person name="Zheng X.H."/>
            <person name="Zhong F.N."/>
            <person name="Zhong W."/>
            <person name="Zhou X."/>
            <person name="Zhu S.C."/>
            <person name="Zhu X."/>
            <person name="Smith H.O."/>
            <person name="Gibbs R.A."/>
            <person name="Myers E.W."/>
            <person name="Rubin G.M."/>
            <person name="Venter J.C."/>
        </authorList>
    </citation>
    <scope>NUCLEOTIDE SEQUENCE [LARGE SCALE GENOMIC DNA]</scope>
    <source>
        <strain evidence="8">Berkeley</strain>
    </source>
</reference>
<reference evidence="19 21" key="4">
    <citation type="journal article" date="2002" name="Genome Biol.">
        <title>Annotation of the Drosophila melanogaster euchromatic genome: a systematic review.</title>
        <authorList>
            <person name="Misra S."/>
            <person name="Crosby M.A."/>
            <person name="Mungall C.J."/>
            <person name="Matthews B.B."/>
            <person name="Campbell K.S."/>
            <person name="Hradecky P."/>
            <person name="Huang Y."/>
            <person name="Kaminker J.S."/>
            <person name="Millburn G.H."/>
            <person name="Prochnik S.E."/>
            <person name="Smith C.D."/>
            <person name="Tupy J.L."/>
            <person name="Whitfield E.J."/>
            <person name="Bayraktaroglu L."/>
            <person name="Berman B.P."/>
            <person name="Bettencourt B.R."/>
            <person name="Celniker S.E."/>
            <person name="de Grey A.D.N.J."/>
            <person name="Drysdale R.A."/>
            <person name="Harris N.L."/>
            <person name="Richter J."/>
            <person name="Russo S."/>
            <person name="Schroeder A.J."/>
            <person name="Shu S.Q."/>
            <person name="Stapleton M."/>
            <person name="Yamada C."/>
            <person name="Ashburner M."/>
            <person name="Gelbart W.M."/>
            <person name="Rubin G.M."/>
            <person name="Lewis S.E."/>
        </authorList>
    </citation>
    <scope>GENOME REANNOTATION</scope>
    <scope>ALTERNATIVE SPLICING (ISOFORMS A AND C)</scope>
    <source>
        <strain>Berkeley</strain>
    </source>
</reference>
<reference evidence="19 20" key="5">
    <citation type="journal article" date="1998" name="J. Cell Biol.">
        <title>Human autoantibodies reveal titin as a chromosomal protein.</title>
        <authorList>
            <person name="Machado C."/>
            <person name="Sunkel C.E."/>
            <person name="Andrew D.J."/>
        </authorList>
    </citation>
    <scope>NUCLEOTIDE SEQUENCE [MRNA] OF 1-880 (ISOFORMS A/C/D/E)</scope>
    <scope>NUCLEOTIDE SEQUENCE [MRNA] OF 7219-7572 (ISOFORMS B/C/D/E)</scope>
    <scope>NUCLEOTIDE SEQUENCE [GENOMIC DNA] OF 10456-10723</scope>
    <scope>NUCLEOTIDE SEQUENCE [MRNA] OF 11358-11461 (ISOFORMS B/C/D/E)</scope>
    <scope>FUNCTION</scope>
    <scope>SUBCELLULAR LOCATION</scope>
    <scope>TISSUE SPECIFICITY</scope>
</reference>
<reference evidence="19 26" key="6">
    <citation type="journal article" date="2000" name="J. Mol. Biol.">
        <title>Sequence and expression of the kettin gene in Drosophila melanogaster and Caenorhabditis elegans.</title>
        <authorList>
            <person name="Kolmerer B."/>
            <person name="Clayton J."/>
            <person name="Benes V."/>
            <person name="Allen T."/>
            <person name="Ferguson C."/>
            <person name="Leonard K."/>
            <person name="Weber U."/>
            <person name="Knekt M."/>
            <person name="Ansorge W."/>
            <person name="Labeit S."/>
            <person name="Bullard B."/>
        </authorList>
    </citation>
    <scope>NUCLEOTIDE SEQUENCE [GENOMIC DNA] OF 1-3999</scope>
    <scope>FUNCTION</scope>
    <scope>TISSUE SPECIFICITY</scope>
    <source>
        <strain evidence="7">Berkeley</strain>
    </source>
</reference>
<reference evidence="19 25" key="7">
    <citation type="journal article" date="1999" name="J. Mol. Biol.">
        <title>Association of kettin with actin in the Z-disc of insect flight muscle.</title>
        <authorList>
            <person name="van Straaten M."/>
            <person name="Goulding D."/>
            <person name="Kolmerer B."/>
            <person name="Labeit S."/>
            <person name="Clayton J."/>
            <person name="Leonard K."/>
            <person name="Bullard B."/>
        </authorList>
    </citation>
    <scope>NUCLEOTIDE SEQUENCE [MRNA] OF 371-500 AND 3126-3354</scope>
    <scope>ACTIN-BINDING</scope>
    <scope>SUBCELLULAR LOCATION</scope>
</reference>
<reference evidence="19 30" key="8">
    <citation type="journal article" date="1993" name="EMBO J.">
        <title>Kettin, a large modular protein in the Z-disc of insect muscles.</title>
        <authorList>
            <person name="Lakey A."/>
            <person name="Labeit S."/>
            <person name="Gautel M."/>
            <person name="Ferguson C."/>
            <person name="Barlow D."/>
            <person name="Leonard K."/>
            <person name="Bullard B."/>
        </authorList>
    </citation>
    <scope>NUCLEOTIDE SEQUENCE [GENOMIC DNA] OF 1691-2214</scope>
    <scope>FUNCTION</scope>
    <scope>SUBCELLULAR LOCATION</scope>
    <scope>TISSUE SPECIFICITY</scope>
</reference>
<reference evidence="19 29" key="9">
    <citation type="journal article" date="2000" name="J. Cell Biol.">
        <title>D-Titin: a giant protein with dual roles in chromosomes and muscles.</title>
        <authorList>
            <person name="Machado C."/>
            <person name="Andrew D.J."/>
        </authorList>
    </citation>
    <scope>NUCLEOTIDE SEQUENCE [MRNA] OF 3091-3407</scope>
    <scope>NUCLEOTIDE SEQUENCE [GENOMIC DNA] OF 6635-7000</scope>
    <scope>FUNCTION</scope>
    <scope>SUBCELLULAR LOCATION</scope>
    <scope>TISSUE SPECIFICITY</scope>
    <scope>IDENTIFICATION (ISOFORMS A AND B)</scope>
    <scope>DEVELOPMENTAL STAGE</scope>
    <scope>DISRUPTION PHENOTYPE</scope>
    <source>
        <tissue evidence="22">Muscle</tissue>
    </source>
</reference>
<reference evidence="23" key="10">
    <citation type="journal article" date="2002" name="Genome Biol.">
        <title>A Drosophila full-length cDNA resource.</title>
        <authorList>
            <person name="Stapleton M."/>
            <person name="Carlson J.W."/>
            <person name="Brokstein P."/>
            <person name="Yu C."/>
            <person name="Champe M."/>
            <person name="George R.A."/>
            <person name="Guarin H."/>
            <person name="Kronmiller B."/>
            <person name="Pacleb J.M."/>
            <person name="Park S."/>
            <person name="Wan K.H."/>
            <person name="Rubin G.M."/>
            <person name="Celniker S.E."/>
        </authorList>
    </citation>
    <scope>NUCLEOTIDE SEQUENCE [LARGE SCALE MRNA] OF 13581-14436 (ISOFORMS B/C/D/E)</scope>
    <source>
        <strain evidence="11">Berkeley</strain>
        <tissue evidence="11">Ovary</tissue>
    </source>
</reference>
<reference key="11">
    <citation type="journal article" date="2012" name="J. Cell Biol.">
        <title>Organelle positioning in muscles requires cooperation between two KASH proteins and microtubules.</title>
        <authorList>
            <person name="Elhanany-Tamir H."/>
            <person name="Yu Y.V."/>
            <person name="Shnayder M."/>
            <person name="Jain A."/>
            <person name="Welte M."/>
            <person name="Volk T."/>
        </authorList>
    </citation>
    <scope>INTERACTION WITH MSP300</scope>
</reference>
<reference key="12">
    <citation type="journal article" date="2012" name="J. Cell Sci.">
        <title>The function of the M-line protein obscurin in controlling the symmetry of the sarcomere in the flight muscle of Drosophila.</title>
        <authorList>
            <person name="Katzemich A."/>
            <person name="Kreiskoether N."/>
            <person name="Alexandrovich A."/>
            <person name="Elliott C."/>
            <person name="Schoeck F."/>
            <person name="Leonard K."/>
            <person name="Sparrow J."/>
            <person name="Bullard B."/>
        </authorList>
    </citation>
    <scope>SUBCELLULAR LOCATION</scope>
    <scope>TISSUE SPECIFICITY</scope>
    <scope>DEVELOPMENTAL STAGE</scope>
</reference>
<reference key="13">
    <citation type="journal article" date="2015" name="J. Cell Sci.">
        <title>Binding partners of the kinase domains in Drosophila obscurin and their effect on the structure of the flight muscle.</title>
        <authorList>
            <person name="Katzemich A."/>
            <person name="West R.J."/>
            <person name="Fukuzawa A."/>
            <person name="Sweeney S.T."/>
            <person name="Gautel M."/>
            <person name="Sparrow J."/>
            <person name="Bullard B."/>
        </authorList>
    </citation>
    <scope>SUBCELLULAR LOCATION</scope>
    <scope>TISSUE SPECIFICITY</scope>
</reference>
<organism>
    <name type="scientific">Drosophila melanogaster</name>
    <name type="common">Fruit fly</name>
    <dbReference type="NCBI Taxonomy" id="7227"/>
    <lineage>
        <taxon>Eukaryota</taxon>
        <taxon>Metazoa</taxon>
        <taxon>Ecdysozoa</taxon>
        <taxon>Arthropoda</taxon>
        <taxon>Hexapoda</taxon>
        <taxon>Insecta</taxon>
        <taxon>Pterygota</taxon>
        <taxon>Neoptera</taxon>
        <taxon>Endopterygota</taxon>
        <taxon>Diptera</taxon>
        <taxon>Brachycera</taxon>
        <taxon>Muscomorpha</taxon>
        <taxon>Ephydroidea</taxon>
        <taxon>Drosophilidae</taxon>
        <taxon>Drosophila</taxon>
        <taxon>Sophophora</taxon>
    </lineage>
</organism>
<protein>
    <recommendedName>
        <fullName evidence="19">Titin</fullName>
    </recommendedName>
    <alternativeName>
        <fullName>D-Titin</fullName>
    </alternativeName>
    <alternativeName>
        <fullName>Kettin</fullName>
    </alternativeName>
</protein>
<dbReference type="EMBL" id="AB026845">
    <property type="protein sequence ID" value="BAA90301.2"/>
    <property type="molecule type" value="mRNA"/>
</dbReference>
<dbReference type="EMBL" id="AJ238575">
    <property type="protein sequence ID" value="CAB43710.1"/>
    <property type="molecule type" value="Genomic_DNA"/>
</dbReference>
<dbReference type="EMBL" id="AJ238577">
    <property type="protein sequence ID" value="CAB43739.2"/>
    <property type="molecule type" value="Genomic_DNA"/>
</dbReference>
<dbReference type="EMBL" id="AJ271740">
    <property type="protein sequence ID" value="CAB93524.1"/>
    <property type="molecule type" value="Genomic_DNA"/>
</dbReference>
<dbReference type="EMBL" id="AJ400900">
    <property type="protein sequence ID" value="CAB96426.1"/>
    <property type="molecule type" value="mRNA"/>
</dbReference>
<dbReference type="EMBL" id="AJ400901">
    <property type="protein sequence ID" value="CAB96427.1"/>
    <property type="molecule type" value="mRNA"/>
</dbReference>
<dbReference type="EMBL" id="AJ400902">
    <property type="protein sequence ID" value="CAB96531.1"/>
    <property type="molecule type" value="mRNA"/>
</dbReference>
<dbReference type="EMBL" id="AE014296">
    <property type="protein sequence ID" value="AAF47604.1"/>
    <property type="molecule type" value="Genomic_DNA"/>
</dbReference>
<dbReference type="EMBL" id="AF045775">
    <property type="protein sequence ID" value="AAC23966.1"/>
    <property type="molecule type" value="mRNA"/>
</dbReference>
<dbReference type="EMBL" id="AF045776">
    <property type="protein sequence ID" value="AAC23965.1"/>
    <property type="molecule type" value="mRNA"/>
</dbReference>
<dbReference type="EMBL" id="AF045777">
    <property type="protein sequence ID" value="AAC23964.1"/>
    <property type="molecule type" value="mRNA"/>
</dbReference>
<dbReference type="EMBL" id="AF045778">
    <property type="protein sequence ID" value="AAC23963.1"/>
    <property type="molecule type" value="Genomic_DNA"/>
</dbReference>
<dbReference type="EMBL" id="AJ245406">
    <property type="protein sequence ID" value="CAB76253.1"/>
    <property type="molecule type" value="Genomic_DNA"/>
</dbReference>
<dbReference type="EMBL" id="AJ012279">
    <property type="protein sequence ID" value="CAA09970.1"/>
    <property type="molecule type" value="mRNA"/>
</dbReference>
<dbReference type="EMBL" id="AJ012280">
    <property type="protein sequence ID" value="CAA09971.1"/>
    <property type="molecule type" value="mRNA"/>
</dbReference>
<dbReference type="EMBL" id="AF135062">
    <property type="protein sequence ID" value="AAF61414.1"/>
    <property type="molecule type" value="mRNA"/>
</dbReference>
<dbReference type="EMBL" id="AF135167">
    <property type="protein sequence ID" value="AAF62351.1"/>
    <property type="molecule type" value="Transcribed_RNA"/>
</dbReference>
<dbReference type="EMBL" id="AF241648">
    <property type="protein sequence ID" value="AAG40155.1"/>
    <property type="molecule type" value="mRNA"/>
</dbReference>
<dbReference type="EMBL" id="AF241649">
    <property type="protein sequence ID" value="AAF44704.1"/>
    <property type="molecule type" value="Genomic_DNA"/>
</dbReference>
<dbReference type="EMBL" id="BK000146">
    <property type="protein sequence ID" value="DAA00021.1"/>
    <property type="molecule type" value="mRNA"/>
</dbReference>
<dbReference type="EMBL" id="AY094749">
    <property type="protein sequence ID" value="AAM11102.1"/>
    <property type="status" value="ALT_INIT"/>
    <property type="molecule type" value="mRNA"/>
</dbReference>
<dbReference type="PIR" id="S35341">
    <property type="entry name" value="S35341"/>
</dbReference>
<dbReference type="RefSeq" id="NP_524676.2">
    <property type="nucleotide sequence ID" value="NM_079937.4"/>
</dbReference>
<dbReference type="BioGRID" id="68776">
    <property type="interactions" value="11"/>
</dbReference>
<dbReference type="FunCoup" id="Q9I7U4">
    <property type="interactions" value="8"/>
</dbReference>
<dbReference type="IntAct" id="Q9I7U4">
    <property type="interactions" value="2"/>
</dbReference>
<dbReference type="STRING" id="7227.FBpp0304920"/>
<dbReference type="GlyGen" id="Q9I7U4">
    <property type="glycosylation" value="5 sites"/>
</dbReference>
<dbReference type="PaxDb" id="7227-FBpp0304920"/>
<dbReference type="PeptideAtlas" id="Q9I7U4"/>
<dbReference type="EnsemblMetazoa" id="FBtr0072848">
    <property type="protein sequence ID" value="FBpp0072727"/>
    <property type="gene ID" value="FBgn0086906"/>
</dbReference>
<dbReference type="EnsemblMetazoa" id="FBtr0332679">
    <property type="protein sequence ID" value="FBpp0304925"/>
    <property type="gene ID" value="FBgn0086906"/>
</dbReference>
<dbReference type="GeneID" id="44013"/>
<dbReference type="KEGG" id="dme:Dmel_CG1915"/>
<dbReference type="AGR" id="FB:FBgn0086906"/>
<dbReference type="CTD" id="44013"/>
<dbReference type="FlyBase" id="FBgn0086906">
    <property type="gene designation" value="sls"/>
</dbReference>
<dbReference type="VEuPathDB" id="VectorBase:FBgn0086906"/>
<dbReference type="eggNOG" id="KOG0613">
    <property type="taxonomic scope" value="Eukaryota"/>
</dbReference>
<dbReference type="eggNOG" id="KOG1216">
    <property type="taxonomic scope" value="Eukaryota"/>
</dbReference>
<dbReference type="eggNOG" id="KOG4475">
    <property type="taxonomic scope" value="Eukaryota"/>
</dbReference>
<dbReference type="GeneTree" id="ENSGT00940000169215"/>
<dbReference type="InParanoid" id="Q9I7U4"/>
<dbReference type="OrthoDB" id="6612025at2759"/>
<dbReference type="SignaLink" id="Q9I7U4"/>
<dbReference type="BioGRID-ORCS" id="44013">
    <property type="hits" value="0 hits in 3 CRISPR screens"/>
</dbReference>
<dbReference type="ChiTaRS" id="sls">
    <property type="organism name" value="fly"/>
</dbReference>
<dbReference type="GenomeRNAi" id="44013"/>
<dbReference type="PRO" id="PR:Q9I7U4"/>
<dbReference type="Proteomes" id="UP000000803">
    <property type="component" value="Chromosome 3L"/>
</dbReference>
<dbReference type="Bgee" id="FBgn0086906">
    <property type="expression patterns" value="Expressed in indirect flight muscle cell (Drosophila) in dorsal vessel heart and 210 other cell types or tissues"/>
</dbReference>
<dbReference type="ExpressionAtlas" id="Q9I7U4">
    <property type="expression patterns" value="baseline and differential"/>
</dbReference>
<dbReference type="GO" id="GO:0000794">
    <property type="term" value="C:condensed nuclear chromosome"/>
    <property type="evidence" value="ECO:0000314"/>
    <property type="project" value="UniProtKB"/>
</dbReference>
<dbReference type="GO" id="GO:0031674">
    <property type="term" value="C:I band"/>
    <property type="evidence" value="ECO:0000314"/>
    <property type="project" value="FlyBase"/>
</dbReference>
<dbReference type="GO" id="GO:0030017">
    <property type="term" value="C:sarcomere"/>
    <property type="evidence" value="ECO:0000314"/>
    <property type="project" value="UniProtKB"/>
</dbReference>
<dbReference type="GO" id="GO:0005863">
    <property type="term" value="C:striated muscle myosin thick filament"/>
    <property type="evidence" value="ECO:0000314"/>
    <property type="project" value="FlyBase"/>
</dbReference>
<dbReference type="GO" id="GO:0030018">
    <property type="term" value="C:Z disc"/>
    <property type="evidence" value="ECO:0000314"/>
    <property type="project" value="UniProtKB"/>
</dbReference>
<dbReference type="GO" id="GO:0003779">
    <property type="term" value="F:actin binding"/>
    <property type="evidence" value="ECO:0000314"/>
    <property type="project" value="UniProtKB"/>
</dbReference>
<dbReference type="GO" id="GO:0008307">
    <property type="term" value="F:structural constituent of muscle"/>
    <property type="evidence" value="ECO:0000315"/>
    <property type="project" value="UniProtKB"/>
</dbReference>
<dbReference type="GO" id="GO:0051301">
    <property type="term" value="P:cell division"/>
    <property type="evidence" value="ECO:0007669"/>
    <property type="project" value="UniProtKB-KW"/>
</dbReference>
<dbReference type="GO" id="GO:0040011">
    <property type="term" value="P:locomotion"/>
    <property type="evidence" value="ECO:0000315"/>
    <property type="project" value="UniProtKB"/>
</dbReference>
<dbReference type="GO" id="GO:0007498">
    <property type="term" value="P:mesoderm development"/>
    <property type="evidence" value="ECO:0000270"/>
    <property type="project" value="FlyBase"/>
</dbReference>
<dbReference type="GO" id="GO:0007076">
    <property type="term" value="P:mitotic chromosome condensation"/>
    <property type="evidence" value="ECO:0000315"/>
    <property type="project" value="UniProtKB"/>
</dbReference>
<dbReference type="GO" id="GO:0016203">
    <property type="term" value="P:muscle attachment"/>
    <property type="evidence" value="ECO:0000315"/>
    <property type="project" value="UniProtKB"/>
</dbReference>
<dbReference type="GO" id="GO:0007520">
    <property type="term" value="P:myoblast fusion"/>
    <property type="evidence" value="ECO:0000315"/>
    <property type="project" value="UniProtKB"/>
</dbReference>
<dbReference type="GO" id="GO:0035206">
    <property type="term" value="P:regulation of hemocyte proliferation"/>
    <property type="evidence" value="ECO:0000315"/>
    <property type="project" value="FlyBase"/>
</dbReference>
<dbReference type="GO" id="GO:0045214">
    <property type="term" value="P:sarcomere organization"/>
    <property type="evidence" value="ECO:0000314"/>
    <property type="project" value="FlyBase"/>
</dbReference>
<dbReference type="GO" id="GO:0007062">
    <property type="term" value="P:sister chromatid cohesion"/>
    <property type="evidence" value="ECO:0000315"/>
    <property type="project" value="UniProtKB"/>
</dbReference>
<dbReference type="GO" id="GO:0007525">
    <property type="term" value="P:somatic muscle development"/>
    <property type="evidence" value="ECO:0000315"/>
    <property type="project" value="UniProtKB"/>
</dbReference>
<dbReference type="GO" id="GO:0007522">
    <property type="term" value="P:visceral muscle development"/>
    <property type="evidence" value="ECO:0000270"/>
    <property type="project" value="BHF-UCL"/>
</dbReference>
<dbReference type="CDD" id="cd00063">
    <property type="entry name" value="FN3"/>
    <property type="match status" value="5"/>
</dbReference>
<dbReference type="CDD" id="cd00096">
    <property type="entry name" value="Ig"/>
    <property type="match status" value="12"/>
</dbReference>
<dbReference type="CDD" id="cd05744">
    <property type="entry name" value="IgI_Myotilin_C_like"/>
    <property type="match status" value="1"/>
</dbReference>
<dbReference type="CDD" id="cd11856">
    <property type="entry name" value="SH3_p47phox_like"/>
    <property type="match status" value="1"/>
</dbReference>
<dbReference type="FunFam" id="2.60.40.10:FF:000344">
    <property type="entry name" value="Muscle M-line assembly protein unc-89"/>
    <property type="match status" value="1"/>
</dbReference>
<dbReference type="FunFam" id="2.60.40.10:FF:000345">
    <property type="entry name" value="Muscle M-line assembly protein unc-89"/>
    <property type="match status" value="1"/>
</dbReference>
<dbReference type="FunFam" id="2.60.40.10:FF:001409">
    <property type="entry name" value="Muscle M-line assembly protein unc-89"/>
    <property type="match status" value="1"/>
</dbReference>
<dbReference type="FunFam" id="2.60.40.10:FF:000147">
    <property type="entry name" value="Myosin light chain kinase"/>
    <property type="match status" value="2"/>
</dbReference>
<dbReference type="FunFam" id="2.60.40.10:FF:000425">
    <property type="entry name" value="Myosin light chain kinase"/>
    <property type="match status" value="1"/>
</dbReference>
<dbReference type="FunFam" id="2.60.40.10:FF:000031">
    <property type="entry name" value="Myosin-binding protein C, slow type"/>
    <property type="match status" value="2"/>
</dbReference>
<dbReference type="FunFam" id="2.60.40.10:FF:000119">
    <property type="entry name" value="Sallimus, isoform P"/>
    <property type="match status" value="11"/>
</dbReference>
<dbReference type="FunFam" id="2.60.40.10:FF:000430">
    <property type="entry name" value="Sallimus, isoform P"/>
    <property type="match status" value="3"/>
</dbReference>
<dbReference type="FunFam" id="2.60.40.10:FF:000966">
    <property type="entry name" value="Sallimus, isoform P"/>
    <property type="match status" value="1"/>
</dbReference>
<dbReference type="FunFam" id="2.60.40.10:FF:001019">
    <property type="entry name" value="Sallimus, isoform P"/>
    <property type="match status" value="1"/>
</dbReference>
<dbReference type="FunFam" id="2.60.40.10:FF:001113">
    <property type="entry name" value="Sallimus, isoform P"/>
    <property type="match status" value="1"/>
</dbReference>
<dbReference type="FunFam" id="2.60.40.10:FF:001128">
    <property type="entry name" value="Sallimus, isoform P"/>
    <property type="match status" value="1"/>
</dbReference>
<dbReference type="FunFam" id="2.60.40.10:FF:001138">
    <property type="entry name" value="Sallimus, isoform P"/>
    <property type="match status" value="1"/>
</dbReference>
<dbReference type="FunFam" id="2.60.40.10:FF:001152">
    <property type="entry name" value="Sallimus, isoform P"/>
    <property type="match status" value="1"/>
</dbReference>
<dbReference type="FunFam" id="2.60.40.10:FF:001153">
    <property type="entry name" value="Sallimus, isoform P"/>
    <property type="match status" value="1"/>
</dbReference>
<dbReference type="FunFam" id="2.60.40.10:FF:001196">
    <property type="entry name" value="Sallimus, isoform P"/>
    <property type="match status" value="1"/>
</dbReference>
<dbReference type="FunFam" id="2.60.40.10:FF:001222">
    <property type="entry name" value="Sallimus, isoform P"/>
    <property type="match status" value="1"/>
</dbReference>
<dbReference type="FunFam" id="2.60.40.10:FF:001238">
    <property type="entry name" value="Sallimus, isoform P"/>
    <property type="match status" value="1"/>
</dbReference>
<dbReference type="FunFam" id="2.60.40.10:FF:001269">
    <property type="entry name" value="Sallimus, isoform P"/>
    <property type="match status" value="1"/>
</dbReference>
<dbReference type="FunFam" id="2.60.40.10:FF:001353">
    <property type="entry name" value="Sallimus, isoform P"/>
    <property type="match status" value="1"/>
</dbReference>
<dbReference type="FunFam" id="2.60.40.10:FF:001667">
    <property type="entry name" value="Sallimus, isoform P"/>
    <property type="match status" value="1"/>
</dbReference>
<dbReference type="FunFam" id="2.60.40.10:FF:000474">
    <property type="entry name" value="Sallimus, isoform Q"/>
    <property type="match status" value="2"/>
</dbReference>
<dbReference type="FunFam" id="2.60.40.10:FF:000809">
    <property type="entry name" value="Sallimus, isoform Q"/>
    <property type="match status" value="1"/>
</dbReference>
<dbReference type="FunFam" id="2.60.40.10:FF:001048">
    <property type="entry name" value="Sallimus, isoform Q"/>
    <property type="match status" value="1"/>
</dbReference>
<dbReference type="FunFam" id="2.60.40.10:FF:001060">
    <property type="entry name" value="Sallimus, isoform Q"/>
    <property type="match status" value="1"/>
</dbReference>
<dbReference type="FunFam" id="2.60.40.10:FF:001154">
    <property type="entry name" value="Sallimus, isoform Q"/>
    <property type="match status" value="1"/>
</dbReference>
<dbReference type="FunFam" id="2.60.40.10:FF:001163">
    <property type="entry name" value="Sallimus, isoform Q"/>
    <property type="match status" value="1"/>
</dbReference>
<dbReference type="FunFam" id="2.60.40.10:FF:001194">
    <property type="entry name" value="Sallimus, isoform Q"/>
    <property type="match status" value="1"/>
</dbReference>
<dbReference type="FunFam" id="2.60.40.10:FF:001335">
    <property type="entry name" value="Sallimus, isoform Q"/>
    <property type="match status" value="1"/>
</dbReference>
<dbReference type="FunFam" id="2.60.40.10:FF:001354">
    <property type="entry name" value="Sallimus, isoform Q"/>
    <property type="match status" value="1"/>
</dbReference>
<dbReference type="FunFam" id="2.60.40.10:FF:001311">
    <property type="entry name" value="Sallimus, isoform U"/>
    <property type="match status" value="1"/>
</dbReference>
<dbReference type="FunFam" id="2.60.40.10:FF:001403">
    <property type="entry name" value="Sallimus, isoform U"/>
    <property type="match status" value="1"/>
</dbReference>
<dbReference type="FunFam" id="2.60.40.10:FF:001542">
    <property type="entry name" value="Sallimus, isoform U"/>
    <property type="match status" value="1"/>
</dbReference>
<dbReference type="FunFam" id="2.60.40.10:FF:000050">
    <property type="entry name" value="Titin isoform B"/>
    <property type="match status" value="2"/>
</dbReference>
<dbReference type="FunFam" id="2.60.40.10:FF:000962">
    <property type="entry name" value="titin isoform X1"/>
    <property type="match status" value="1"/>
</dbReference>
<dbReference type="FunFam" id="2.60.40.10:FF:000056">
    <property type="entry name" value="twitchin isoform X4"/>
    <property type="match status" value="1"/>
</dbReference>
<dbReference type="FunFam" id="2.60.40.10:FF:001509">
    <property type="entry name" value="Uncharacterized protein, isoform D"/>
    <property type="match status" value="1"/>
</dbReference>
<dbReference type="Gene3D" id="2.60.40.10">
    <property type="entry name" value="Immunoglobulins"/>
    <property type="match status" value="58"/>
</dbReference>
<dbReference type="Gene3D" id="2.30.30.40">
    <property type="entry name" value="SH3 Domains"/>
    <property type="match status" value="1"/>
</dbReference>
<dbReference type="InterPro" id="IPR003961">
    <property type="entry name" value="FN3_dom"/>
</dbReference>
<dbReference type="InterPro" id="IPR036116">
    <property type="entry name" value="FN3_sf"/>
</dbReference>
<dbReference type="InterPro" id="IPR007110">
    <property type="entry name" value="Ig-like_dom"/>
</dbReference>
<dbReference type="InterPro" id="IPR036179">
    <property type="entry name" value="Ig-like_dom_sf"/>
</dbReference>
<dbReference type="InterPro" id="IPR013783">
    <property type="entry name" value="Ig-like_fold"/>
</dbReference>
<dbReference type="InterPro" id="IPR013098">
    <property type="entry name" value="Ig_I-set"/>
</dbReference>
<dbReference type="InterPro" id="IPR003599">
    <property type="entry name" value="Ig_sub"/>
</dbReference>
<dbReference type="InterPro" id="IPR003598">
    <property type="entry name" value="Ig_sub2"/>
</dbReference>
<dbReference type="InterPro" id="IPR036028">
    <property type="entry name" value="SH3-like_dom_sf"/>
</dbReference>
<dbReference type="InterPro" id="IPR001452">
    <property type="entry name" value="SH3_domain"/>
</dbReference>
<dbReference type="PANTHER" id="PTHR47633">
    <property type="entry name" value="IMMUNOGLOBULIN"/>
    <property type="match status" value="1"/>
</dbReference>
<dbReference type="Pfam" id="PF00041">
    <property type="entry name" value="fn3"/>
    <property type="match status" value="4"/>
</dbReference>
<dbReference type="Pfam" id="PF07679">
    <property type="entry name" value="I-set"/>
    <property type="match status" value="53"/>
</dbReference>
<dbReference type="Pfam" id="PF07653">
    <property type="entry name" value="SH3_2"/>
    <property type="match status" value="1"/>
</dbReference>
<dbReference type="SMART" id="SM00060">
    <property type="entry name" value="FN3"/>
    <property type="match status" value="5"/>
</dbReference>
<dbReference type="SMART" id="SM00409">
    <property type="entry name" value="IG"/>
    <property type="match status" value="53"/>
</dbReference>
<dbReference type="SMART" id="SM00408">
    <property type="entry name" value="IGc2"/>
    <property type="match status" value="47"/>
</dbReference>
<dbReference type="SMART" id="SM00326">
    <property type="entry name" value="SH3"/>
    <property type="match status" value="1"/>
</dbReference>
<dbReference type="SUPFAM" id="SSF49265">
    <property type="entry name" value="Fibronectin type III"/>
    <property type="match status" value="3"/>
</dbReference>
<dbReference type="SUPFAM" id="SSF48726">
    <property type="entry name" value="Immunoglobulin"/>
    <property type="match status" value="53"/>
</dbReference>
<dbReference type="SUPFAM" id="SSF50044">
    <property type="entry name" value="SH3-domain"/>
    <property type="match status" value="1"/>
</dbReference>
<dbReference type="PROSITE" id="PS50853">
    <property type="entry name" value="FN3"/>
    <property type="match status" value="5"/>
</dbReference>
<dbReference type="PROSITE" id="PS50835">
    <property type="entry name" value="IG_LIKE"/>
    <property type="match status" value="51"/>
</dbReference>
<dbReference type="PROSITE" id="PS50002">
    <property type="entry name" value="SH3"/>
    <property type="match status" value="1"/>
</dbReference>
<proteinExistence type="evidence at protein level"/>
<gene>
    <name type="primary">sls</name>
    <name evidence="27" type="synonym">titin</name>
    <name type="ORF">CG1915</name>
</gene>
<comment type="function">
    <text evidence="6 7 9 10 15 16">Key component in the assembly and functioning of adult and embryonic striated muscles and muscle tendons. By providing connections at the level of individual microfilaments, it contributes to the fine balance of forces between the two halves of the sarcomere. The size and extensibility of the cross-links are the main determinants of sarcomere extensibility properties of muscle. In non-muscle cells, seems to play a role in chromosome condensation and chromosome segregation during mitosis. Might link the lamina network to chromatin or nuclear actin, or both during interphase.</text>
</comment>
<comment type="subunit">
    <text evidence="13">Interacts with Msp300; this interaction mediates the recruitment of Msp300 to the Z-disks.</text>
</comment>
<comment type="subcellular location">
    <subcellularLocation>
        <location evidence="10">Cytoplasm</location>
    </subcellularLocation>
    <subcellularLocation>
        <location evidence="16">Nucleus</location>
    </subcellularLocation>
    <subcellularLocation>
        <location evidence="16">Chromosome</location>
    </subcellularLocation>
    <text>Uniformly distributed along condensed mitotic chromosomes (PubMed:9548712).</text>
</comment>
<comment type="subcellular location">
    <molecule>Isoform A</molecule>
    <subcellularLocation>
        <location evidence="12 14 15">Cytoplasm</location>
        <location evidence="12 14 15">Myofibril</location>
        <location evidence="12 14 15">Sarcomere</location>
        <location evidence="12 14 15">Z line</location>
    </subcellularLocation>
    <text evidence="14">Colocalizes with ball and mask in Z-lines of indirect flight muscle (PubMed:26251439). In the embryo, localizes across the muscles in a striped pattern positioned at the sites at which muscles are attached to the epidermis. In the larval body wall muscles, localizes to the Z line and is still present as a doublet at the muscle-epidermal attachment sites. During pupa development, progressively forms broad striations at the Z line which become more defined after the pupa eclosion.</text>
</comment>
<comment type="alternative products">
    <event type="alternative splicing"/>
    <isoform>
        <id>Q9I7U4-1</id>
        <name evidence="8">C</name>
        <sequence type="displayed"/>
    </isoform>
    <isoform>
        <id>Q9I7U4-2</id>
        <name evidence="6 10">A</name>
        <name evidence="25">Ket</name>
        <name evidence="24">Kettin</name>
        <sequence type="described" ref="VSP_052103 VSP_052104"/>
    </isoform>
    <isoform>
        <id>Q9I7U4-3</id>
        <name evidence="10">B</name>
        <sequence type="described" ref="VSP_052098 VSP_052099 VSP_052100 VSP_052101 VSP_052102 VSP_052105 VSP_052106 VSP_052107 VSP_052108 VSP_052109 VSP_052110 VSP_052112 VSP_052113 VSP_052115 VSP_052117 VSP_052118 VSP_052119 VSP_052120 VSP_052121"/>
    </isoform>
    <isoform>
        <id>Q9I7U4-4</id>
        <name evidence="9">D</name>
        <sequence type="described" ref="VSP_052111 VSP_052114"/>
    </isoform>
    <isoform>
        <id>Q9I7U4-5</id>
        <name evidence="9">E</name>
        <sequence type="described" ref="VSP_052116"/>
    </isoform>
</comment>
<comment type="tissue specificity">
    <text evidence="6 7 9 10 12 14 15 16">Expressed in the mesoderm at stage 11, several hours before myoblast fusion, and persists in most muscle cells, somatic, visceral and pharyngeal muscles and their precursors, until the third instar (PubMed:10629221, PubMed:10669599, PubMed:10934048, PubMed:11062264, PubMed:8335002, PubMed:9548712). Isoform A: Expressed in the indirect flight muscle (at protein level) (PubMed:22467859, PubMed:26251439, PubMed:8335002).</text>
</comment>
<comment type="developmental stage">
    <text evidence="10 12">Expressed both maternally and zygotically (PubMed:11062264). Expressed throughout larval, pupal and adult stages (PubMed:22467859).</text>
</comment>
<comment type="disruption phenotype">
    <text evidence="10">Flies exhibit chromosome undercondensation, chromosome breakage, loss of diploidy, and premature sister chromatid separation. They also exhibit defects in myoblast fusion, muscle organization and gut morphogenesis.</text>
</comment>
<comment type="similarity">
    <text evidence="19">Belongs to the protein kinase superfamily. CAMK Ser/Thr protein kinase family.</text>
</comment>
<comment type="sequence caution" evidence="19">
    <conflict type="erroneous initiation">
        <sequence resource="EMBL-CDS" id="AAM11102"/>
    </conflict>
    <text>Truncated N-terminus.</text>
</comment>
<feature type="chain" id="PRO_0000247656" description="Titin">
    <location>
        <begin position="1"/>
        <end position="18141"/>
    </location>
</feature>
<feature type="domain" description="Ig-like 1" evidence="1">
    <location>
        <begin position="86"/>
        <end position="177"/>
    </location>
</feature>
<feature type="domain" description="Ig-like 2" evidence="1">
    <location>
        <begin position="255"/>
        <end position="343"/>
    </location>
</feature>
<feature type="domain" description="Ig-like 3" evidence="1">
    <location>
        <begin position="372"/>
        <end position="461"/>
    </location>
</feature>
<feature type="domain" description="Ig-like 4" evidence="1">
    <location>
        <begin position="471"/>
        <end position="559"/>
    </location>
</feature>
<feature type="domain" description="Ig-like 5" evidence="1">
    <location>
        <begin position="618"/>
        <end position="708"/>
    </location>
</feature>
<feature type="domain" description="Ig-like 6" evidence="1">
    <location>
        <begin position="751"/>
        <end position="842"/>
    </location>
</feature>
<feature type="domain" description="Ig-like 7" evidence="1">
    <location>
        <begin position="890"/>
        <end position="981"/>
    </location>
</feature>
<feature type="domain" description="Ig-like 8" evidence="1">
    <location>
        <begin position="1024"/>
        <end position="1115"/>
    </location>
</feature>
<feature type="domain" description="Ig-like 9" evidence="1">
    <location>
        <begin position="1158"/>
        <end position="1249"/>
    </location>
</feature>
<feature type="domain" description="Ig-like 10" evidence="1">
    <location>
        <begin position="1291"/>
        <end position="1381"/>
    </location>
</feature>
<feature type="domain" description="Ig-like 11" evidence="1">
    <location>
        <begin position="1424"/>
        <end position="1515"/>
    </location>
</feature>
<feature type="domain" description="Ig-like 12" evidence="1">
    <location>
        <begin position="1558"/>
        <end position="1643"/>
    </location>
</feature>
<feature type="domain" description="Ig-like 13" evidence="1">
    <location>
        <begin position="1691"/>
        <end position="1781"/>
    </location>
</feature>
<feature type="domain" description="Ig-like 14" evidence="1">
    <location>
        <begin position="1824"/>
        <end position="1917"/>
    </location>
</feature>
<feature type="domain" description="Ig-like 15" evidence="1">
    <location>
        <begin position="1958"/>
        <end position="2050"/>
    </location>
</feature>
<feature type="domain" description="Ig-like 16" evidence="1">
    <location>
        <begin position="2089"/>
        <end position="2180"/>
    </location>
</feature>
<feature type="domain" description="Ig-like 17" evidence="1">
    <location>
        <begin position="2222"/>
        <end position="2313"/>
    </location>
</feature>
<feature type="domain" description="Ig-like 18" evidence="1">
    <location>
        <begin position="2356"/>
        <end position="2449"/>
    </location>
</feature>
<feature type="domain" description="Ig-like 19" evidence="1">
    <location>
        <begin position="2488"/>
        <end position="2581"/>
    </location>
</feature>
<feature type="domain" description="Ig-like 20" evidence="1">
    <location>
        <begin position="2622"/>
        <end position="2715"/>
    </location>
</feature>
<feature type="domain" description="Ig-like 21" evidence="1">
    <location>
        <begin position="2754"/>
        <end position="2844"/>
    </location>
</feature>
<feature type="domain" description="Ig-like 22" evidence="1">
    <location>
        <begin position="2891"/>
        <end position="2983"/>
    </location>
</feature>
<feature type="domain" description="Ig-like 23" evidence="1">
    <location>
        <begin position="3029"/>
        <end position="3116"/>
    </location>
</feature>
<feature type="domain" description="Ig-like 24" evidence="1">
    <location>
        <begin position="3130"/>
        <end position="3221"/>
    </location>
</feature>
<feature type="domain" description="Ig-like 25" evidence="1">
    <location>
        <begin position="3263"/>
        <end position="3354"/>
    </location>
</feature>
<feature type="domain" description="Ig-like 26" evidence="1">
    <location>
        <begin position="3401"/>
        <end position="3494"/>
    </location>
</feature>
<feature type="domain" description="Ig-like 27" evidence="1">
    <location>
        <begin position="3539"/>
        <end position="3625"/>
    </location>
</feature>
<feature type="domain" description="Ig-like 28" evidence="1">
    <location>
        <begin position="3676"/>
        <end position="3767"/>
    </location>
</feature>
<feature type="domain" description="Ig-like 29" evidence="1">
    <location>
        <begin position="3811"/>
        <end position="3901"/>
    </location>
</feature>
<feature type="repeat" description="TPR 1" evidence="1">
    <location>
        <begin position="3910"/>
        <end position="3944"/>
    </location>
</feature>
<feature type="domain" description="Ig-like 30" evidence="1">
    <location>
        <begin position="3954"/>
        <end position="4047"/>
    </location>
</feature>
<feature type="domain" description="Ig-like 31" evidence="1">
    <location>
        <begin position="4092"/>
        <end position="4181"/>
    </location>
</feature>
<feature type="domain" description="Ig-like 32" evidence="1">
    <location>
        <begin position="4394"/>
        <end position="4482"/>
    </location>
</feature>
<feature type="repeat" description="TPR 2" evidence="1">
    <location>
        <begin position="4403"/>
        <end position="4438"/>
    </location>
</feature>
<feature type="domain" description="Ig-like 33" evidence="1">
    <location>
        <begin position="4497"/>
        <end position="4585"/>
    </location>
</feature>
<feature type="domain" description="Ig-like 34" evidence="1">
    <location>
        <begin position="4604"/>
        <end position="4692"/>
    </location>
</feature>
<feature type="domain" description="Ig-like 35" evidence="1">
    <location>
        <begin position="4703"/>
        <end position="4791"/>
    </location>
</feature>
<feature type="repeat" description="TPR 3" evidence="1">
    <location>
        <begin position="5575"/>
        <end position="5613"/>
    </location>
</feature>
<feature type="domain" description="Ig-like 36" evidence="1">
    <location>
        <begin position="6536"/>
        <end position="6624"/>
    </location>
</feature>
<feature type="domain" description="Ig-like 37" evidence="1">
    <location>
        <begin position="6633"/>
        <end position="6728"/>
    </location>
</feature>
<feature type="domain" description="Ig-like 38" evidence="1">
    <location>
        <begin position="6741"/>
        <end position="6830"/>
    </location>
</feature>
<feature type="domain" description="Ig-like 39" evidence="1">
    <location>
        <begin position="6841"/>
        <end position="6929"/>
    </location>
</feature>
<feature type="domain" description="Ig-like 40" evidence="1">
    <location>
        <begin position="6942"/>
        <end position="7034"/>
    </location>
</feature>
<feature type="domain" description="Ig-like 41" evidence="1">
    <location>
        <begin position="7066"/>
        <end position="7151"/>
    </location>
</feature>
<feature type="domain" description="Ig-like 42" evidence="1">
    <location>
        <begin position="7189"/>
        <end position="7279"/>
    </location>
</feature>
<feature type="repeat" description="TPR 4">
    <location>
        <begin position="11872"/>
        <end position="11905"/>
    </location>
</feature>
<feature type="repeat" description="TPR 5">
    <location>
        <begin position="13566"/>
        <end position="13599"/>
    </location>
</feature>
<feature type="repeat" description="TPR 6">
    <location>
        <begin position="14904"/>
        <end position="14936"/>
    </location>
</feature>
<feature type="domain" description="SH3" evidence="3">
    <location>
        <begin position="16409"/>
        <end position="16470"/>
    </location>
</feature>
<feature type="domain" description="Ig-like 43">
    <location>
        <begin position="16501"/>
        <end position="16590"/>
    </location>
</feature>
<feature type="domain" description="Ig-like 44">
    <location>
        <begin position="16625"/>
        <end position="16719"/>
    </location>
</feature>
<feature type="domain" description="Ig-like 45">
    <location>
        <begin position="16728"/>
        <end position="16811"/>
    </location>
</feature>
<feature type="domain" description="Ig-like 46">
    <location>
        <begin position="16822"/>
        <end position="16916"/>
    </location>
</feature>
<feature type="domain" description="Ig-like 47">
    <location>
        <begin position="16919"/>
        <end position="17001"/>
    </location>
</feature>
<feature type="domain" description="Ig-like 48">
    <location>
        <begin position="17007"/>
        <end position="17091"/>
    </location>
</feature>
<feature type="domain" description="Ig-like 49">
    <location>
        <begin position="17097"/>
        <end position="17180"/>
    </location>
</feature>
<feature type="domain" description="Ig-like 50">
    <location>
        <begin position="17184"/>
        <end position="17270"/>
    </location>
</feature>
<feature type="domain" description="Ig-like 51">
    <location>
        <begin position="17277"/>
        <end position="17363"/>
    </location>
</feature>
<feature type="domain" description="Fibronectin type-III 1" evidence="4">
    <location>
        <begin position="17374"/>
        <end position="17467"/>
    </location>
</feature>
<feature type="domain" description="Ig-like 52">
    <location>
        <begin position="17473"/>
        <end position="17558"/>
    </location>
</feature>
<feature type="domain" description="Ig-like 53">
    <location>
        <begin position="17563"/>
        <end position="17653"/>
    </location>
</feature>
<feature type="domain" description="Fibronectin type-III 2" evidence="4">
    <location>
        <begin position="17660"/>
        <end position="17755"/>
    </location>
</feature>
<feature type="repeat" description="TPR 7">
    <location>
        <begin position="17694"/>
        <end position="17728"/>
    </location>
</feature>
<feature type="domain" description="Fibronectin type-III 3" evidence="4">
    <location>
        <begin position="17760"/>
        <end position="17861"/>
    </location>
</feature>
<feature type="domain" description="Fibronectin type-III 4" evidence="4">
    <location>
        <begin position="17862"/>
        <end position="17958"/>
    </location>
</feature>
<feature type="domain" description="Fibronectin type-III 5" evidence="4">
    <location>
        <begin position="17982"/>
        <end position="18078"/>
    </location>
</feature>
<feature type="region of interest" description="Disordered" evidence="5">
    <location>
        <begin position="1"/>
        <end position="69"/>
    </location>
</feature>
<feature type="region of interest" description="Disordered" evidence="5">
    <location>
        <begin position="236"/>
        <end position="266"/>
    </location>
</feature>
<feature type="region of interest" description="Disordered" evidence="5">
    <location>
        <begin position="2338"/>
        <end position="2357"/>
    </location>
</feature>
<feature type="region of interest" description="Disordered" evidence="5">
    <location>
        <begin position="2731"/>
        <end position="2750"/>
    </location>
</feature>
<feature type="region of interest" description="Disordered" evidence="5">
    <location>
        <begin position="4226"/>
        <end position="4254"/>
    </location>
</feature>
<feature type="region of interest" description="Disordered" evidence="5">
    <location>
        <begin position="4299"/>
        <end position="4336"/>
    </location>
</feature>
<feature type="region of interest" description="Disordered" evidence="5">
    <location>
        <begin position="4803"/>
        <end position="4891"/>
    </location>
</feature>
<feature type="region of interest" description="Disordered" evidence="5">
    <location>
        <begin position="5318"/>
        <end position="5368"/>
    </location>
</feature>
<feature type="region of interest" description="Disordered" evidence="5">
    <location>
        <begin position="5413"/>
        <end position="5648"/>
    </location>
</feature>
<feature type="region of interest" description="Disordered" evidence="5">
    <location>
        <begin position="5667"/>
        <end position="5701"/>
    </location>
</feature>
<feature type="region of interest" description="Disordered" evidence="5">
    <location>
        <begin position="5718"/>
        <end position="5748"/>
    </location>
</feature>
<feature type="region of interest" description="Disordered" evidence="5">
    <location>
        <begin position="5775"/>
        <end position="5982"/>
    </location>
</feature>
<feature type="region of interest" description="Disordered" evidence="5">
    <location>
        <begin position="6034"/>
        <end position="6350"/>
    </location>
</feature>
<feature type="region of interest" description="Disordered" evidence="5">
    <location>
        <begin position="6364"/>
        <end position="6393"/>
    </location>
</feature>
<feature type="region of interest" description="Disordered" evidence="5">
    <location>
        <begin position="7773"/>
        <end position="7793"/>
    </location>
</feature>
<feature type="region of interest" description="Disordered" evidence="5">
    <location>
        <begin position="9414"/>
        <end position="9440"/>
    </location>
</feature>
<feature type="region of interest" description="Disordered" evidence="5">
    <location>
        <begin position="9485"/>
        <end position="9510"/>
    </location>
</feature>
<feature type="region of interest" description="Disordered" evidence="5">
    <location>
        <begin position="9556"/>
        <end position="9582"/>
    </location>
</feature>
<feature type="region of interest" description="Disordered" evidence="5">
    <location>
        <begin position="9627"/>
        <end position="9652"/>
    </location>
</feature>
<feature type="region of interest" description="Disordered" evidence="5">
    <location>
        <begin position="9698"/>
        <end position="9724"/>
    </location>
</feature>
<feature type="region of interest" description="Disordered" evidence="5">
    <location>
        <begin position="9769"/>
        <end position="9796"/>
    </location>
</feature>
<feature type="region of interest" description="Disordered" evidence="5">
    <location>
        <begin position="9838"/>
        <end position="9865"/>
    </location>
</feature>
<feature type="region of interest" description="Disordered" evidence="5">
    <location>
        <begin position="9911"/>
        <end position="9937"/>
    </location>
</feature>
<feature type="region of interest" description="Disordered" evidence="5">
    <location>
        <begin position="9982"/>
        <end position="10008"/>
    </location>
</feature>
<feature type="region of interest" description="Disordered" evidence="5">
    <location>
        <begin position="10053"/>
        <end position="10080"/>
    </location>
</feature>
<feature type="region of interest" description="Disordered" evidence="5">
    <location>
        <begin position="10125"/>
        <end position="10149"/>
    </location>
</feature>
<feature type="region of interest" description="Disordered" evidence="5">
    <location>
        <begin position="10195"/>
        <end position="10220"/>
    </location>
</feature>
<feature type="region of interest" description="Disordered" evidence="5">
    <location>
        <begin position="10266"/>
        <end position="10291"/>
    </location>
</feature>
<feature type="region of interest" description="Disordered" evidence="5">
    <location>
        <begin position="10337"/>
        <end position="10364"/>
    </location>
</feature>
<feature type="region of interest" description="Disordered" evidence="5">
    <location>
        <begin position="10408"/>
        <end position="10433"/>
    </location>
</feature>
<feature type="region of interest" description="Disordered" evidence="5">
    <location>
        <begin position="10479"/>
        <end position="10504"/>
    </location>
</feature>
<feature type="region of interest" description="Disordered" evidence="5">
    <location>
        <begin position="10550"/>
        <end position="10576"/>
    </location>
</feature>
<feature type="region of interest" description="Disordered" evidence="5">
    <location>
        <begin position="10621"/>
        <end position="10648"/>
    </location>
</feature>
<feature type="region of interest" description="Disordered" evidence="5">
    <location>
        <begin position="10692"/>
        <end position="10717"/>
    </location>
</feature>
<feature type="region of interest" description="Disordered" evidence="5">
    <location>
        <begin position="10763"/>
        <end position="10788"/>
    </location>
</feature>
<feature type="region of interest" description="Disordered" evidence="5">
    <location>
        <begin position="10834"/>
        <end position="10860"/>
    </location>
</feature>
<feature type="region of interest" description="Disordered" evidence="5">
    <location>
        <begin position="10905"/>
        <end position="10932"/>
    </location>
</feature>
<feature type="region of interest" description="Disordered" evidence="5">
    <location>
        <begin position="11047"/>
        <end position="11073"/>
    </location>
</feature>
<feature type="region of interest" description="Disordered" evidence="5">
    <location>
        <begin position="11118"/>
        <end position="11143"/>
    </location>
</feature>
<feature type="region of interest" description="Disordered" evidence="5">
    <location>
        <begin position="11189"/>
        <end position="11216"/>
    </location>
</feature>
<feature type="region of interest" description="Disordered" evidence="5">
    <location>
        <begin position="11260"/>
        <end position="11286"/>
    </location>
</feature>
<feature type="region of interest" description="Disordered" evidence="5">
    <location>
        <begin position="11679"/>
        <end position="11703"/>
    </location>
</feature>
<feature type="region of interest" description="Disordered" evidence="5">
    <location>
        <begin position="11767"/>
        <end position="11795"/>
    </location>
</feature>
<feature type="region of interest" description="Disordered" evidence="5">
    <location>
        <begin position="12003"/>
        <end position="12201"/>
    </location>
</feature>
<feature type="region of interest" description="Disordered" evidence="5">
    <location>
        <begin position="12451"/>
        <end position="12471"/>
    </location>
</feature>
<feature type="region of interest" description="Disordered" evidence="5">
    <location>
        <begin position="12685"/>
        <end position="12767"/>
    </location>
</feature>
<feature type="region of interest" description="Disordered" evidence="5">
    <location>
        <begin position="12943"/>
        <end position="12971"/>
    </location>
</feature>
<feature type="region of interest" description="Disordered" evidence="5">
    <location>
        <begin position="13131"/>
        <end position="13154"/>
    </location>
</feature>
<feature type="region of interest" description="Disordered" evidence="5">
    <location>
        <begin position="13325"/>
        <end position="13349"/>
    </location>
</feature>
<feature type="region of interest" description="Disordered" evidence="5">
    <location>
        <begin position="13471"/>
        <end position="13492"/>
    </location>
</feature>
<feature type="region of interest" description="Disordered" evidence="5">
    <location>
        <begin position="13554"/>
        <end position="13576"/>
    </location>
</feature>
<feature type="region of interest" description="Disordered" evidence="5">
    <location>
        <begin position="13702"/>
        <end position="13792"/>
    </location>
</feature>
<feature type="region of interest" description="Disordered" evidence="5">
    <location>
        <begin position="13891"/>
        <end position="13914"/>
    </location>
</feature>
<feature type="region of interest" description="Disordered" evidence="5">
    <location>
        <begin position="13951"/>
        <end position="13994"/>
    </location>
</feature>
<feature type="region of interest" description="Disordered" evidence="5">
    <location>
        <begin position="14073"/>
        <end position="14094"/>
    </location>
</feature>
<feature type="region of interest" description="Disordered" evidence="5">
    <location>
        <begin position="14109"/>
        <end position="14322"/>
    </location>
</feature>
<feature type="region of interest" description="Disordered" evidence="5">
    <location>
        <begin position="14354"/>
        <end position="14377"/>
    </location>
</feature>
<feature type="region of interest" description="Disordered" evidence="5">
    <location>
        <begin position="14414"/>
        <end position="14448"/>
    </location>
</feature>
<feature type="region of interest" description="Disordered" evidence="5">
    <location>
        <begin position="14533"/>
        <end position="14566"/>
    </location>
</feature>
<feature type="region of interest" description="Disordered" evidence="5">
    <location>
        <begin position="14583"/>
        <end position="14720"/>
    </location>
</feature>
<feature type="region of interest" description="Disordered" evidence="5">
    <location>
        <begin position="14756"/>
        <end position="14789"/>
    </location>
</feature>
<feature type="region of interest" description="Disordered" evidence="5">
    <location>
        <begin position="14956"/>
        <end position="15208"/>
    </location>
</feature>
<feature type="region of interest" description="Disordered" evidence="5">
    <location>
        <begin position="15301"/>
        <end position="15329"/>
    </location>
</feature>
<feature type="region of interest" description="Disordered" evidence="5">
    <location>
        <begin position="15425"/>
        <end position="15448"/>
    </location>
</feature>
<feature type="region of interest" description="Disordered" evidence="5">
    <location>
        <begin position="15578"/>
        <end position="15597"/>
    </location>
</feature>
<feature type="region of interest" description="Disordered" evidence="5">
    <location>
        <begin position="15697"/>
        <end position="15722"/>
    </location>
</feature>
<feature type="region of interest" description="Disordered" evidence="5">
    <location>
        <begin position="15825"/>
        <end position="15876"/>
    </location>
</feature>
<feature type="region of interest" description="Disordered" evidence="5">
    <location>
        <begin position="15951"/>
        <end position="15973"/>
    </location>
</feature>
<feature type="region of interest" description="Disordered" evidence="5">
    <location>
        <begin position="16181"/>
        <end position="16206"/>
    </location>
</feature>
<feature type="region of interest" description="Disordered" evidence="5">
    <location>
        <begin position="17741"/>
        <end position="17771"/>
    </location>
</feature>
<feature type="coiled-coil region" evidence="1">
    <location>
        <begin position="4204"/>
        <end position="4229"/>
    </location>
</feature>
<feature type="coiled-coil region" evidence="1">
    <location>
        <begin position="7621"/>
        <end position="7663"/>
    </location>
</feature>
<feature type="compositionally biased region" description="Low complexity" evidence="5">
    <location>
        <begin position="1"/>
        <end position="31"/>
    </location>
</feature>
<feature type="compositionally biased region" description="Basic and acidic residues" evidence="5">
    <location>
        <begin position="32"/>
        <end position="47"/>
    </location>
</feature>
<feature type="compositionally biased region" description="Low complexity" evidence="5">
    <location>
        <begin position="48"/>
        <end position="62"/>
    </location>
</feature>
<feature type="compositionally biased region" description="Basic and acidic residues" evidence="5">
    <location>
        <begin position="2338"/>
        <end position="2347"/>
    </location>
</feature>
<feature type="compositionally biased region" description="Basic and acidic residues" evidence="5">
    <location>
        <begin position="2734"/>
        <end position="2746"/>
    </location>
</feature>
<feature type="compositionally biased region" description="Polar residues" evidence="5">
    <location>
        <begin position="4309"/>
        <end position="4322"/>
    </location>
</feature>
<feature type="compositionally biased region" description="Low complexity" evidence="5">
    <location>
        <begin position="4822"/>
        <end position="4841"/>
    </location>
</feature>
<feature type="compositionally biased region" description="Basic residues" evidence="5">
    <location>
        <begin position="4852"/>
        <end position="4863"/>
    </location>
</feature>
<feature type="compositionally biased region" description="Basic and acidic residues" evidence="5">
    <location>
        <begin position="5344"/>
        <end position="5357"/>
    </location>
</feature>
<feature type="compositionally biased region" description="Basic and acidic residues" evidence="5">
    <location>
        <begin position="5436"/>
        <end position="5447"/>
    </location>
</feature>
<feature type="compositionally biased region" description="Basic and acidic residues" evidence="5">
    <location>
        <begin position="5541"/>
        <end position="5552"/>
    </location>
</feature>
<feature type="compositionally biased region" description="Basic and acidic residues" evidence="5">
    <location>
        <begin position="5591"/>
        <end position="5621"/>
    </location>
</feature>
<feature type="compositionally biased region" description="Basic and acidic residues" evidence="5">
    <location>
        <begin position="5633"/>
        <end position="5645"/>
    </location>
</feature>
<feature type="compositionally biased region" description="Acidic residues" evidence="5">
    <location>
        <begin position="5681"/>
        <end position="5697"/>
    </location>
</feature>
<feature type="compositionally biased region" description="Acidic residues" evidence="5">
    <location>
        <begin position="5779"/>
        <end position="5792"/>
    </location>
</feature>
<feature type="compositionally biased region" description="Acidic residues" evidence="5">
    <location>
        <begin position="5818"/>
        <end position="5860"/>
    </location>
</feature>
<feature type="compositionally biased region" description="Basic residues" evidence="5">
    <location>
        <begin position="5865"/>
        <end position="5874"/>
    </location>
</feature>
<feature type="compositionally biased region" description="Acidic residues" evidence="5">
    <location>
        <begin position="5883"/>
        <end position="5904"/>
    </location>
</feature>
<feature type="compositionally biased region" description="Basic residues" evidence="5">
    <location>
        <begin position="5910"/>
        <end position="5920"/>
    </location>
</feature>
<feature type="compositionally biased region" description="Basic and acidic residues" evidence="5">
    <location>
        <begin position="5921"/>
        <end position="5971"/>
    </location>
</feature>
<feature type="compositionally biased region" description="Basic residues" evidence="5">
    <location>
        <begin position="6034"/>
        <end position="6043"/>
    </location>
</feature>
<feature type="compositionally biased region" description="Acidic residues" evidence="5">
    <location>
        <begin position="6049"/>
        <end position="6079"/>
    </location>
</feature>
<feature type="compositionally biased region" description="Basic and acidic residues" evidence="5">
    <location>
        <begin position="6081"/>
        <end position="6092"/>
    </location>
</feature>
<feature type="compositionally biased region" description="Basic and acidic residues" evidence="5">
    <location>
        <begin position="6099"/>
        <end position="6133"/>
    </location>
</feature>
<feature type="compositionally biased region" description="Basic and acidic residues" evidence="5">
    <location>
        <begin position="6141"/>
        <end position="6169"/>
    </location>
</feature>
<feature type="compositionally biased region" description="Basic and acidic residues" evidence="5">
    <location>
        <begin position="6195"/>
        <end position="6209"/>
    </location>
</feature>
<feature type="compositionally biased region" description="Basic and acidic residues" evidence="5">
    <location>
        <begin position="6217"/>
        <end position="6234"/>
    </location>
</feature>
<feature type="compositionally biased region" description="Basic and acidic residues" evidence="5">
    <location>
        <begin position="6259"/>
        <end position="6268"/>
    </location>
</feature>
<feature type="compositionally biased region" description="Acidic residues" evidence="5">
    <location>
        <begin position="6281"/>
        <end position="6290"/>
    </location>
</feature>
<feature type="compositionally biased region" description="Basic and acidic residues" evidence="5">
    <location>
        <begin position="6291"/>
        <end position="6306"/>
    </location>
</feature>
<feature type="compositionally biased region" description="Basic residues" evidence="5">
    <location>
        <begin position="6307"/>
        <end position="6318"/>
    </location>
</feature>
<feature type="compositionally biased region" description="Acidic residues" evidence="5">
    <location>
        <begin position="6325"/>
        <end position="6349"/>
    </location>
</feature>
<feature type="compositionally biased region" description="Acidic residues" evidence="5">
    <location>
        <begin position="6364"/>
        <end position="6373"/>
    </location>
</feature>
<feature type="compositionally biased region" description="Basic and acidic residues" evidence="5">
    <location>
        <begin position="7774"/>
        <end position="7783"/>
    </location>
</feature>
<feature type="compositionally biased region" description="Acidic residues" evidence="5">
    <location>
        <begin position="9429"/>
        <end position="9440"/>
    </location>
</feature>
<feature type="compositionally biased region" description="Acidic residues" evidence="5">
    <location>
        <begin position="9500"/>
        <end position="9510"/>
    </location>
</feature>
<feature type="compositionally biased region" description="Acidic residues" evidence="5">
    <location>
        <begin position="9571"/>
        <end position="9582"/>
    </location>
</feature>
<feature type="compositionally biased region" description="Acidic residues" evidence="5">
    <location>
        <begin position="9642"/>
        <end position="9652"/>
    </location>
</feature>
<feature type="compositionally biased region" description="Acidic residues" evidence="5">
    <location>
        <begin position="9713"/>
        <end position="9724"/>
    </location>
</feature>
<feature type="compositionally biased region" description="Acidic residues" evidence="5">
    <location>
        <begin position="9784"/>
        <end position="9796"/>
    </location>
</feature>
<feature type="compositionally biased region" description="Acidic residues" evidence="5">
    <location>
        <begin position="9855"/>
        <end position="9865"/>
    </location>
</feature>
<feature type="compositionally biased region" description="Acidic residues" evidence="5">
    <location>
        <begin position="9926"/>
        <end position="9937"/>
    </location>
</feature>
<feature type="compositionally biased region" description="Acidic residues" evidence="5">
    <location>
        <begin position="9997"/>
        <end position="10008"/>
    </location>
</feature>
<feature type="compositionally biased region" description="Acidic residues" evidence="5">
    <location>
        <begin position="10068"/>
        <end position="10080"/>
    </location>
</feature>
<feature type="compositionally biased region" description="Acidic residues" evidence="5">
    <location>
        <begin position="10139"/>
        <end position="10149"/>
    </location>
</feature>
<feature type="compositionally biased region" description="Acidic residues" evidence="5">
    <location>
        <begin position="10210"/>
        <end position="10220"/>
    </location>
</feature>
<feature type="compositionally biased region" description="Acidic residues" evidence="5">
    <location>
        <begin position="10281"/>
        <end position="10291"/>
    </location>
</feature>
<feature type="compositionally biased region" description="Acidic residues" evidence="5">
    <location>
        <begin position="10352"/>
        <end position="10364"/>
    </location>
</feature>
<feature type="compositionally biased region" description="Acidic residues" evidence="5">
    <location>
        <begin position="10423"/>
        <end position="10433"/>
    </location>
</feature>
<feature type="compositionally biased region" description="Acidic residues" evidence="5">
    <location>
        <begin position="10494"/>
        <end position="10504"/>
    </location>
</feature>
<feature type="compositionally biased region" description="Acidic residues" evidence="5">
    <location>
        <begin position="10565"/>
        <end position="10576"/>
    </location>
</feature>
<feature type="compositionally biased region" description="Acidic residues" evidence="5">
    <location>
        <begin position="10636"/>
        <end position="10648"/>
    </location>
</feature>
<feature type="compositionally biased region" description="Acidic residues" evidence="5">
    <location>
        <begin position="10707"/>
        <end position="10717"/>
    </location>
</feature>
<feature type="compositionally biased region" description="Acidic residues" evidence="5">
    <location>
        <begin position="10778"/>
        <end position="10788"/>
    </location>
</feature>
<feature type="compositionally biased region" description="Acidic residues" evidence="5">
    <location>
        <begin position="10849"/>
        <end position="10860"/>
    </location>
</feature>
<feature type="compositionally biased region" description="Acidic residues" evidence="5">
    <location>
        <begin position="10920"/>
        <end position="10932"/>
    </location>
</feature>
<feature type="compositionally biased region" description="Acidic residues" evidence="5">
    <location>
        <begin position="11062"/>
        <end position="11073"/>
    </location>
</feature>
<feature type="compositionally biased region" description="Acidic residues" evidence="5">
    <location>
        <begin position="11133"/>
        <end position="11143"/>
    </location>
</feature>
<feature type="compositionally biased region" description="Acidic residues" evidence="5">
    <location>
        <begin position="11204"/>
        <end position="11216"/>
    </location>
</feature>
<feature type="compositionally biased region" description="Acidic residues" evidence="5">
    <location>
        <begin position="11275"/>
        <end position="11286"/>
    </location>
</feature>
<feature type="compositionally biased region" description="Basic residues" evidence="5">
    <location>
        <begin position="11686"/>
        <end position="11699"/>
    </location>
</feature>
<feature type="compositionally biased region" description="Basic and acidic residues" evidence="5">
    <location>
        <begin position="11780"/>
        <end position="11792"/>
    </location>
</feature>
<feature type="compositionally biased region" description="Basic and acidic residues" evidence="5">
    <location>
        <begin position="12022"/>
        <end position="12035"/>
    </location>
</feature>
<feature type="compositionally biased region" description="Basic and acidic residues" evidence="5">
    <location>
        <begin position="12044"/>
        <end position="12054"/>
    </location>
</feature>
<feature type="compositionally biased region" description="Basic and acidic residues" evidence="5">
    <location>
        <begin position="12124"/>
        <end position="12134"/>
    </location>
</feature>
<feature type="compositionally biased region" description="Basic and acidic residues" evidence="5">
    <location>
        <begin position="12183"/>
        <end position="12201"/>
    </location>
</feature>
<feature type="compositionally biased region" description="Basic and acidic residues" evidence="5">
    <location>
        <begin position="12457"/>
        <end position="12471"/>
    </location>
</feature>
<feature type="compositionally biased region" description="Basic and acidic residues" evidence="5">
    <location>
        <begin position="12685"/>
        <end position="12709"/>
    </location>
</feature>
<feature type="compositionally biased region" description="Acidic residues" evidence="5">
    <location>
        <begin position="12731"/>
        <end position="12741"/>
    </location>
</feature>
<feature type="compositionally biased region" description="Basic residues" evidence="5">
    <location>
        <begin position="12750"/>
        <end position="12760"/>
    </location>
</feature>
<feature type="compositionally biased region" description="Basic and acidic residues" evidence="5">
    <location>
        <begin position="13141"/>
        <end position="13154"/>
    </location>
</feature>
<feature type="compositionally biased region" description="Basic residues" evidence="5">
    <location>
        <begin position="13482"/>
        <end position="13492"/>
    </location>
</feature>
<feature type="compositionally biased region" description="Basic and acidic residues" evidence="5">
    <location>
        <begin position="13733"/>
        <end position="13747"/>
    </location>
</feature>
<feature type="compositionally biased region" description="Basic residues" evidence="5">
    <location>
        <begin position="13771"/>
        <end position="13781"/>
    </location>
</feature>
<feature type="compositionally biased region" description="Basic and acidic residues" evidence="5">
    <location>
        <begin position="13893"/>
        <end position="13906"/>
    </location>
</feature>
<feature type="compositionally biased region" description="Basic and acidic residues" evidence="5">
    <location>
        <begin position="13975"/>
        <end position="13984"/>
    </location>
</feature>
<feature type="compositionally biased region" description="Basic and acidic residues" evidence="5">
    <location>
        <begin position="14221"/>
        <end position="14240"/>
    </location>
</feature>
<feature type="compositionally biased region" description="Low complexity" evidence="5">
    <location>
        <begin position="14264"/>
        <end position="14274"/>
    </location>
</feature>
<feature type="compositionally biased region" description="Basic and acidic residues" evidence="5">
    <location>
        <begin position="14282"/>
        <end position="14294"/>
    </location>
</feature>
<feature type="compositionally biased region" description="Basic and acidic residues" evidence="5">
    <location>
        <begin position="14542"/>
        <end position="14554"/>
    </location>
</feature>
<feature type="compositionally biased region" description="Basic residues" evidence="5">
    <location>
        <begin position="14555"/>
        <end position="14564"/>
    </location>
</feature>
<feature type="compositionally biased region" description="Basic and acidic residues" evidence="5">
    <location>
        <begin position="14583"/>
        <end position="14599"/>
    </location>
</feature>
<feature type="compositionally biased region" description="Low complexity" evidence="5">
    <location>
        <begin position="14652"/>
        <end position="14662"/>
    </location>
</feature>
<feature type="compositionally biased region" description="Polar residues" evidence="5">
    <location>
        <begin position="14664"/>
        <end position="14683"/>
    </location>
</feature>
<feature type="compositionally biased region" description="Basic and acidic residues" evidence="5">
    <location>
        <begin position="14684"/>
        <end position="14697"/>
    </location>
</feature>
<feature type="compositionally biased region" description="Acidic residues" evidence="5">
    <location>
        <begin position="14756"/>
        <end position="14771"/>
    </location>
</feature>
<feature type="compositionally biased region" description="Basic and acidic residues" evidence="5">
    <location>
        <begin position="14967"/>
        <end position="14989"/>
    </location>
</feature>
<feature type="compositionally biased region" description="Basic and acidic residues" evidence="5">
    <location>
        <begin position="15024"/>
        <end position="15046"/>
    </location>
</feature>
<feature type="compositionally biased region" description="Basic and acidic residues" evidence="5">
    <location>
        <begin position="15069"/>
        <end position="15080"/>
    </location>
</feature>
<feature type="compositionally biased region" description="Basic and acidic residues" evidence="5">
    <location>
        <begin position="15088"/>
        <end position="15097"/>
    </location>
</feature>
<feature type="compositionally biased region" description="Basic and acidic residues" evidence="5">
    <location>
        <begin position="15109"/>
        <end position="15139"/>
    </location>
</feature>
<feature type="compositionally biased region" description="Basic and acidic residues" evidence="5">
    <location>
        <begin position="15169"/>
        <end position="15179"/>
    </location>
</feature>
<feature type="compositionally biased region" description="Basic and acidic residues" evidence="5">
    <location>
        <begin position="15189"/>
        <end position="15198"/>
    </location>
</feature>
<feature type="compositionally biased region" description="Basic and acidic residues" evidence="5">
    <location>
        <begin position="15316"/>
        <end position="15325"/>
    </location>
</feature>
<feature type="compositionally biased region" description="Basic and acidic residues" evidence="5">
    <location>
        <begin position="15425"/>
        <end position="15437"/>
    </location>
</feature>
<feature type="compositionally biased region" description="Basic and acidic residues" evidence="5">
    <location>
        <begin position="15578"/>
        <end position="15589"/>
    </location>
</feature>
<feature type="compositionally biased region" description="Acidic residues" evidence="5">
    <location>
        <begin position="15703"/>
        <end position="15716"/>
    </location>
</feature>
<feature type="compositionally biased region" description="Basic and acidic residues" evidence="5">
    <location>
        <begin position="15951"/>
        <end position="15964"/>
    </location>
</feature>
<feature type="compositionally biased region" description="Acidic residues" evidence="5">
    <location>
        <begin position="16183"/>
        <end position="16193"/>
    </location>
</feature>
<feature type="disulfide bond" evidence="2">
    <location>
        <begin position="393"/>
        <end position="445"/>
    </location>
</feature>
<feature type="disulfide bond" evidence="2">
    <location>
        <begin position="1312"/>
        <end position="1365"/>
    </location>
</feature>
<feature type="disulfide bond" evidence="2">
    <location>
        <begin position="1446"/>
        <end position="1499"/>
    </location>
</feature>
<feature type="disulfide bond" evidence="2">
    <location>
        <begin position="1579"/>
        <end position="1632"/>
    </location>
</feature>
<feature type="disulfide bond" evidence="2">
    <location>
        <begin position="1846"/>
        <end position="1899"/>
    </location>
</feature>
<feature type="disulfide bond" evidence="2">
    <location>
        <begin position="2111"/>
        <end position="2164"/>
    </location>
</feature>
<feature type="disulfide bond" evidence="2">
    <location>
        <begin position="2775"/>
        <end position="2828"/>
    </location>
</feature>
<feature type="disulfide bond" evidence="2">
    <location>
        <begin position="3152"/>
        <end position="3205"/>
    </location>
</feature>
<feature type="disulfide bond" evidence="2">
    <location>
        <begin position="3560"/>
        <end position="3613"/>
    </location>
</feature>
<feature type="disulfide bond" evidence="2">
    <location>
        <begin position="3698"/>
        <end position="3751"/>
    </location>
</feature>
<feature type="disulfide bond" evidence="2">
    <location>
        <begin position="3832"/>
        <end position="3885"/>
    </location>
</feature>
<feature type="disulfide bond" evidence="2">
    <location>
        <begin position="3976"/>
        <end position="4029"/>
    </location>
</feature>
<feature type="disulfide bond" evidence="2">
    <location>
        <begin position="4625"/>
        <end position="4676"/>
    </location>
</feature>
<feature type="disulfide bond" evidence="2">
    <location>
        <begin position="6557"/>
        <end position="6608"/>
    </location>
</feature>
<feature type="disulfide bond" evidence="2">
    <location>
        <begin position="6964"/>
        <end position="7016"/>
    </location>
</feature>
<feature type="disulfide bond" evidence="2">
    <location>
        <begin position="16940"/>
        <end position="16989"/>
    </location>
</feature>
<feature type="disulfide bond" evidence="2">
    <location>
        <begin position="17494"/>
        <end position="17542"/>
    </location>
</feature>
<feature type="splice variant" id="VSP_052098" description="In isoform B." evidence="18">
    <original>QRQNPNPYQQQNQQHQQVQQFSSQEYSHSSQEQHQEQRISRTEQHVQRSQVTTQRQ</original>
    <variation>NKVSSLYNDVMNIFQSFIKLKMDINVVQERLKQEQRQKEQRERDARDQAEREKAIKEAEAKERLHREEQSRLENQRQQAAIEQAQRELAARELALREQAVREEEARLQAIREQATREQLAREQAAREEELRIQSLRDIARREEEVRLQNIRDEETRIRREEEERIRRENESRSKREEEARIQREEITRLQTLRDQVDQQRIVTENIRKDIQVNSIFTELRYASPLFTRPLKDAVSREGDRFVFECEVTGTPEPAVEWFKDGISIQTNSDYKTTFDKGICRLVIEETFAADSARFSCRASNLVGTCDTNATLSVRENAAEVQLVPPRILRFLQSGKATEGSSFQFACVVAGVPLPTVQWFKNDKCIDDSPDYVISYNNGEATLKFEEVFLEDDAVYTCSASNPAGIEHCSASLIVEPLEPTELPSFKVPLSNAMARVGQKIKLEAIVGGIPRPEVYWLHNGKPFQPRDSKYEYGRVTLIIPQAYPNDAGSYVLSAKNLAGEAYTSCNVIVKGRLPNETSDSEMASDIEPIKPAVHLPLKDVSIFEGKPVRLDCVIVGQPEPEVIWYHNERPVKESADVQLLFQGDRCSLIIQEVYQEDAGHYKVVAINSAGEASSSCELKVTPLNQAEPATRAQAERQSLPKDSQPKFERLLSDVLADEGEQVVLEVQASGDQPLTAQWFLTNKELQLDQRITTQSDSELGVFKLILNNVSGDDKGVYTVKVTNPAGDAKCFSHLIVKSVNAPENRRSSQSSVEIIERHQCPEFKELFSDKQGEIDEVIKFECIVKGKPTPKVHWFFNDQPVHGHNFLVSTSGERQVLTIQKLTHDAVGKISCVAENEAGKATCVAFLNIRGSGLPASSDVQTVSQEHNTESSRVTIKKQTFTTTSTSQVNSYEGNAPQTEVHHSSAHIDQSLKQLGQQRPEIVESHHYQELHKSKEMSSPTVQQKSFSFIQSSGANGQSAVAIPDSPTRLRREIAPRFTTPLSGKIVDQGADVSMEAIYDGFPSPEIKVEKNGGQLFEDAHTRISNKCNRVTIELKQVGVGDAGRYAVTASNTVGQSTSTADLVVKKTIFPPVFGRRLQAQVSKKGEKLTMEVEVTGLPEPTVTWLKDDKPLKDAGISEHRLLAQGNSYRLIIEKAQTTDSGKYMVRATNAGGEAKSIADCAILEPSPERLQEVVKTIVYETGPVAPASEFKTEVQKQIQNSENQQSYQNSQTEVTSANDLHGLSESKVITEHRCTTEATMRLEHKSNYLDLPELTTRPKTPTTNDTITITTNTATVSMDQPDLTQPTITNTTTTNTTKVPPPVPPKPCTPVVATTFGQQQQQPPQTLTSTRYEQSEHKSTTSSSSFDYFKKIDEETIIQRPNPLTFKPLDTVVRQPQAQSLAEELRSLNLIPGDAPEFCYSPKTERSEPKIPLITEKIKILSEVQPKEPPPQGGVPVFPPPLGLQTVQHESTTTKEVKVEYGQPIVRPAAVLATPAQQNPRSPSPKPSAEGVAMSRLWTPTGVTGYTSDVEQKSEKTVISKLATPTPTKELNAPFLVNQIAKSIPPTTAPVTHLVNVELEPGTPPEICFAPKVEETRRRSLVETMEQKLEQNLIQGPSKVLPHSVPTLTPNTAAPVQPKPLGNTTYRPPPPVLPTRLGVYESDYESDRYKYSGSESDVEPGIRKQPQLTTMETSFKSSGYTADTEEHSSYRKSESSFYETKSSSTMGGAPQLQTQFPKLQPEPPAPIYFTAKPQPQVPPQVPPSQSNVSSQEAKVRIRSSLCLSVCRYYCRSLSLLLALG</variation>
    <location>
        <begin position="2"/>
        <end position="57"/>
    </location>
</feature>
<feature type="splice variant" id="VSP_052099" description="In isoform B." evidence="18">
    <original>EPIPGPEIIYLRHVERAKPHLRPGEEDRVYPPPQFIIPLQNVQQTEGGRVHMEARIEPVGDPTMVVEWYLNGRPLAAS</original>
    <variation>G</variation>
    <location>
        <begin position="586"/>
        <end position="663"/>
    </location>
</feature>
<feature type="splice variant" id="VSP_052100" description="In isoform B." evidence="18">
    <original>GEAQQQATMIVET</original>
    <variation>A</variation>
    <location>
        <begin position="1106"/>
        <end position="1118"/>
    </location>
</feature>
<feature type="splice variant" id="VSP_052101" description="In isoform B." evidence="18">
    <original>MIF</original>
    <variation>QPG</variation>
    <location>
        <begin position="4751"/>
        <end position="4753"/>
    </location>
</feature>
<feature type="splice variant" id="VSP_052102" description="In isoform B." evidence="18">
    <location>
        <begin position="4754"/>
        <end position="4835"/>
    </location>
</feature>
<feature type="splice variant" id="VSP_052103" description="In isoform A." evidence="17 18">
    <original>KRR</original>
    <variation>SKD</variation>
    <location>
        <begin position="4794"/>
        <end position="4796"/>
    </location>
</feature>
<feature type="splice variant" id="VSP_052104" description="In isoform A." evidence="17 18">
    <location>
        <begin position="4797"/>
        <end position="18074"/>
    </location>
</feature>
<feature type="splice variant" id="VSP_052105" description="In isoform B." evidence="18">
    <original>EKEQGVPPQ</original>
    <variation>GK</variation>
    <location>
        <begin position="6626"/>
        <end position="6634"/>
    </location>
</feature>
<feature type="splice variant" id="VSP_052106" description="In isoform B." evidence="18">
    <location>
        <begin position="7030"/>
        <end position="7213"/>
    </location>
</feature>
<feature type="splice variant" id="VSP_052107" description="In isoform B." evidence="18">
    <original>GNPIP</original>
    <variation>NVKIQ</variation>
    <location>
        <begin position="7214"/>
        <end position="7218"/>
    </location>
</feature>
<feature type="splice variant" id="VSP_052108" description="In isoform B." evidence="18">
    <original>TSQIIESHEAITHVKI</original>
    <variation>RSTLSLFNYITFT</variation>
    <location>
        <begin position="7577"/>
        <end position="7592"/>
    </location>
</feature>
<feature type="splice variant" id="VSP_052109" description="In isoform B." evidence="18">
    <original>NVSE</original>
    <variation>NVSEVNVYEQTKAIQDQNKHGLFVKVSKNSDTSKAYLTTIQSTFLKEDILPKPNILQ</variation>
    <location>
        <begin position="9111"/>
        <end position="9114"/>
    </location>
</feature>
<feature type="splice variant" id="VSP_052110" description="In isoform B." evidence="19">
    <original>VKGNKQEFTKIETVEEDDKQPETTVTVEELPYEEEKPEEIQELPEEVCVVETVTEDGKPKKKKIRTRVIKKVKGDKQEVTKIETVEEDDKQPETTVTVEEVPYEEEKPEEIQELPEEVRVVETVTEDGKPKKKKIRTRVIKKVKGDKQEVTKIETVEEDDKQPETTVTVEEVPYEEEKPEEIQELPEEVRVVETVTE</original>
    <variation>GGIPYVQITVEEAKLVNTRADVEENITSVTTEQPNMCIAASIQLPAIEEKKLENALQTPQFASESILKTSPQISRNAHFETRTHEEEYSTTTESLVTTQALRDDIDSTQKNVMQDVQMYKHFATKSLDKTVKVETDTNQATDTTHIKQKTPTHKLASSTTQITESPEIIKTIETISEDGSPSKKMIRTRLIKKVKGN</variation>
    <location>
        <begin position="9329"/>
        <end position="9525"/>
    </location>
</feature>
<feature type="splice variant" id="VSP_052111" description="In isoform D." evidence="19">
    <location>
        <begin position="9335"/>
        <end position="11180"/>
    </location>
</feature>
<feature type="splice variant" id="VSP_052112" description="In isoform B." evidence="19">
    <location>
        <begin position="9526"/>
        <end position="11249"/>
    </location>
</feature>
<feature type="splice variant" id="VSP_052113" description="In isoform B." evidence="19">
    <location>
        <begin position="14333"/>
        <end position="14478"/>
    </location>
</feature>
<feature type="splice variant" id="VSP_052114" description="In isoform D." evidence="19">
    <original>STKVPNEETPVQEQYAKVNV</original>
    <variation>TICKGQC</variation>
    <location>
        <begin position="14438"/>
        <end position="14457"/>
    </location>
</feature>
<feature type="splice variant" id="VSP_052115" description="In isoform B." evidence="19">
    <original>K</original>
    <variation>KTKLYSSRKRRSRRSPVEEAADELKLQQTVVE</variation>
    <location>
        <position position="16100"/>
    </location>
</feature>
<feature type="splice variant" id="VSP_052116" description="In isoform E." evidence="19">
    <original>K</original>
    <variation>KVTEETSDQTVQLKKKKKPQKPVEEAADELKLQQTVVE</variation>
    <location>
        <position position="16100"/>
    </location>
</feature>
<feature type="splice variant" id="VSP_052117" description="In isoform B." evidence="19">
    <original>PGPEDKP</original>
    <variation>KLLPKQK</variation>
    <location>
        <begin position="16492"/>
        <end position="16498"/>
    </location>
</feature>
<feature type="splice variant" id="VSP_052118" description="In isoform B." evidence="19">
    <location>
        <begin position="16499"/>
        <end position="16573"/>
    </location>
</feature>
<feature type="splice variant" id="VSP_052119" description="In isoform B." evidence="19">
    <original>VVDD</original>
    <variation>DVVS</variation>
    <location>
        <begin position="17341"/>
        <end position="17344"/>
    </location>
</feature>
<feature type="splice variant" id="VSP_052120" description="In isoform B." evidence="19">
    <location>
        <begin position="17345"/>
        <end position="17484"/>
    </location>
</feature>
<feature type="splice variant" id="VSP_052121" description="In isoform B." evidence="19">
    <original>GLDIEKYTLEKCDVQNNVWMKVSDFNKDIKSYAVQKLSMNAQYMFRVVAANPIGESEPTESDPVTITKKFEKPSPPRGPTTVSGMNDTSFNLAWEPSETDGGSKIIEYIVEIREETETTYRSVGVTLGTVTNIHVEKVVRNKGYFFRIYARNEVGTSEAFETTEKIVLGRKITPPSPPQNLRAPDVTSRSVTLDWEVPARNGGSEITGYCVEKRSSTSTNWTKVITLDAHQLHYTIDNLKEKCEYWFRVSAENEVGLGAPAVTESISLKTHASEFILVVRNCGSYTEFGFLKAVPSPPTGPLEARVLAANAHIFEWGLPESDGGAPLLGYHIAIRDMKKTMWIEVGRVPAGVLKFQIRDLQENHEYMIRIFAKNEIGLSEPLESEEPYKAMTAGHESLPDEPRTEMSSCNTSSWLRDHHMDADIHSYARGRLLQRDEYFFRLWAELPKSKKKKSSK</original>
    <variation>DEDEVKRSAENAWGKLLPHQKKYFEVSMSQLCFYATVFTTPVDQVRPKETPVKRMLPAARKKPKNQKKKAVPKWRYRSRKRPMAKPTPNPNNPAMSTAFIGFLREYQRRNTIVDVKKRLQRAAKMWSKLSKAQKNKFRTAVSIAAYSLPSADFPPAPATCHLRRRFAWQHIGHVHRSITQNCQSRAAPSLGDFSTLLTTPHWAKFQVLKVCNWIFQVQGNPFRSPLLTAHFYLLSFKKHTKLPGHLRGKFLQTGRIGLYLGFYNVGYSEQLRQFVCDEQLYVQIMAVVNLLASWLYLCFSHRWIYDQFVILLYVPLYIYFLILRRHLTKLLNECAGLHKSMQMIMGDRLCAKIHRECIYTLLLIIMSILRLLWQIRIYSVYQSIFIFGVAFIYHFELLFFGNYLIWLSCIFRSLNVFLAKDMRSDRLQILKGVLRQQTIIWRVHRTVSRYFALHIISFMIQPGIKICIILKCSGIQMNAQIISLILHLLLLGLFMIIASNLQKQHRTFQKSYIGLKDDPNYFVLKSWRLLQNRTLPQAFGVTFLRKREKVQYKQDVITMLLRFSDSQQVYQQRANCCRFLPAVFITMILFLHKLFSYELQKESKLVNLLQIEKRTLKSEIELWNENLTSIYIFLTLVCSLVNKNELWKLINEAQLTYKQLKSLLGKHLVLKCSYDVLIHGLLLILLLAVMVVDIIFFNWPKASGERNTVTLTELHQIFDYLMGIPRLLFVLIMAMRILYHLISAGWLQCLGMLRLQRNLKLYQFQLRSIFYNQKCENILAGHYFKVSYMYFLWMMPFRIAELMQFLKYDYDELVQKQKSQEDLEDEAIWEGEENSRQQNLQELLMKPLLILSWHFALWMLLLAAAYTQQKEYSTLMAKSWNFKSDENGCEMKEFLDEICWTGHAFKQLDILDLLVCTENEQDCICL</variation>
    <location>
        <begin position="17686"/>
        <end position="18141"/>
    </location>
</feature>
<feature type="sequence conflict" description="In Ref. 6; CAB76253." evidence="19" ref="6">
    <original>N</original>
    <variation>S</variation>
    <location>
        <position position="7"/>
    </location>
</feature>
<feature type="sequence conflict" description="In Ref. 5; AAC23966." evidence="19" ref="5">
    <original>E</original>
    <variation>G</variation>
    <location>
        <position position="382"/>
    </location>
</feature>
<feature type="sequence conflict" description="In Ref. 1; BAA90301, 5; AAC23966 and 6." evidence="19" ref="1 5 6">
    <original>N</original>
    <variation>S</variation>
    <location>
        <position position="568"/>
    </location>
</feature>
<feature type="sequence conflict" description="In Ref. 6; CAB76253." evidence="19" ref="6">
    <original>P</original>
    <variation>S</variation>
    <location>
        <position position="722"/>
    </location>
</feature>
<feature type="sequence conflict" description="In Ref. 5; AAC23966." evidence="19" ref="5">
    <original>QQRRHV</original>
    <variation>PASVVM</variation>
    <location>
        <begin position="875"/>
        <end position="880"/>
    </location>
</feature>
<feature type="sequence conflict" description="In Ref. 6; CAB76253." evidence="19" ref="6">
    <original>E</original>
    <variation>G</variation>
    <location>
        <position position="1059"/>
    </location>
</feature>
<feature type="sequence conflict" description="In Ref. 6; CAB76253." evidence="19" ref="6">
    <original>F</original>
    <variation>L</variation>
    <location>
        <position position="1345"/>
    </location>
</feature>
<feature type="sequence conflict" description="In Ref. 1; BAA90301." evidence="19" ref="1">
    <original>E</original>
    <variation>G</variation>
    <location>
        <position position="1405"/>
    </location>
</feature>
<feature type="sequence conflict" description="In Ref. 6; CAB76253." evidence="19" ref="6">
    <original>PV</original>
    <variation>NS</variation>
    <location>
        <begin position="1691"/>
        <end position="1692"/>
    </location>
</feature>
<feature type="sequence conflict" description="In Ref. 6; CAB76253." evidence="19" ref="6">
    <original>S</original>
    <variation>P</variation>
    <location>
        <position position="1779"/>
    </location>
</feature>
<feature type="sequence conflict" description="In Ref. 1; BAA90301 and 6; CAB76253." evidence="19" ref="1 6">
    <original>L</original>
    <variation>H</variation>
    <location>
        <position position="1905"/>
    </location>
</feature>
<feature type="sequence conflict" description="In Ref. 6; CAB76253." evidence="19" ref="6">
    <original>Q</original>
    <variation>H</variation>
    <location>
        <position position="1952"/>
    </location>
</feature>
<feature type="sequence conflict" description="In Ref. 6; CAB76253." evidence="19" ref="6">
    <original>T</original>
    <variation>TVT</variation>
    <location>
        <position position="2050"/>
    </location>
</feature>
<feature type="sequence conflict" description="In Ref. 6; CAB76253." evidence="19" ref="6">
    <original>G</original>
    <variation>R</variation>
    <location>
        <position position="2104"/>
    </location>
</feature>
<feature type="sequence conflict" description="In Ref. 6; CAB76253." evidence="19" ref="6">
    <original>N</original>
    <variation>S</variation>
    <location>
        <position position="2661"/>
    </location>
</feature>
<feature type="sequence conflict" description="In Ref. 6; CAB76253." evidence="19" ref="6">
    <original>M</original>
    <variation>V</variation>
    <location>
        <position position="2934"/>
    </location>
</feature>
<feature type="sequence conflict" description="In Ref. 9; AAF61414/AAG40155." evidence="19" ref="9">
    <original>VLGT</original>
    <variation>EGVR</variation>
    <location>
        <begin position="3091"/>
        <end position="3094"/>
    </location>
</feature>
<feature type="sequence conflict" description="In Ref. 6; CAB76253 and 7; CAA09971." evidence="19" ref="6 7">
    <original>R</original>
    <variation>C</variation>
    <location>
        <position position="3174"/>
    </location>
</feature>
<feature type="sequence conflict" description="In Ref. 9; AAF61414/AAG40155." evidence="19" ref="9">
    <original>G</original>
    <variation>D</variation>
    <location>
        <position position="3303"/>
    </location>
</feature>
<feature type="sequence conflict" description="In Ref. 6; CAB76253." evidence="19" ref="6">
    <original>ANL</original>
    <variation>RGM</variation>
    <location>
        <begin position="3379"/>
        <end position="3381"/>
    </location>
</feature>
<feature type="sequence conflict" description="In Ref. 1; BAA90301." evidence="19" ref="1">
    <original>IME</original>
    <variation>FMD</variation>
    <location>
        <begin position="3500"/>
        <end position="3502"/>
    </location>
</feature>
<feature type="sequence conflict" description="In Ref. 1; BAA90301." evidence="19" ref="1">
    <original>STE</original>
    <variation>GTG</variation>
    <location>
        <begin position="3526"/>
        <end position="3528"/>
    </location>
</feature>
<feature type="sequence conflict" description="In Ref. 6; CAB76253." evidence="19" ref="6">
    <original>D</original>
    <variation>E</variation>
    <location>
        <position position="3592"/>
    </location>
</feature>
<feature type="sequence conflict" description="In Ref. 6; CAB76253." evidence="19" ref="6">
    <original>LE</original>
    <variation>PQ</variation>
    <location>
        <begin position="3598"/>
        <end position="3599"/>
    </location>
</feature>
<feature type="sequence conflict" description="In Ref. 1; BAA90301." evidence="19" ref="1">
    <original>E</original>
    <variation>D</variation>
    <location>
        <position position="3701"/>
    </location>
</feature>
<feature type="sequence conflict" description="In Ref. 1; BAA90301." evidence="19" ref="1">
    <original>H</original>
    <variation>N</variation>
    <location>
        <position position="3857"/>
    </location>
</feature>
<feature type="sequence conflict" description="In Ref. 1; BAA90301." evidence="19" ref="1">
    <original>Y</original>
    <variation>H</variation>
    <location>
        <position position="3891"/>
    </location>
</feature>
<feature type="sequence conflict" description="In Ref. 1; BAA90301." evidence="19" ref="1">
    <original>L</original>
    <variation>F</variation>
    <location>
        <position position="3997"/>
    </location>
</feature>
<feature type="sequence conflict" description="In Ref. 1; BAA90301." evidence="19" ref="1">
    <original>H</original>
    <variation>Q</variation>
    <location>
        <position position="4130"/>
    </location>
</feature>
<feature type="sequence conflict" description="In Ref. 1; BAA90301." evidence="19" ref="1">
    <original>Q</original>
    <variation>H</variation>
    <location>
        <position position="4229"/>
    </location>
</feature>
<feature type="sequence conflict" description="In Ref. 1; BAA90301." evidence="19" ref="1">
    <original>I</original>
    <variation>T</variation>
    <location>
        <position position="4330"/>
    </location>
</feature>
<feature type="sequence conflict" description="In Ref. 1; BAA90301." evidence="19" ref="1">
    <original>QLARFDAKVTGTRPLDVY</original>
    <variation>SWLASMPRLQALAHWMCT</variation>
    <location>
        <begin position="4512"/>
        <end position="4529"/>
    </location>
</feature>
<feature type="sequence conflict" description="In Ref. 9; AAF62351/AAF44704." evidence="19" ref="9">
    <original>E</original>
    <variation>K</variation>
    <location>
        <position position="6650"/>
    </location>
</feature>
<feature type="sequence conflict" description="In Ref. 5; AAC23965." evidence="19" ref="5">
    <original>T</original>
    <variation>S</variation>
    <location>
        <position position="7412"/>
    </location>
</feature>
<feature type="sequence conflict" description="In Ref. 5; AAC23965." evidence="19" ref="5">
    <original>A</original>
    <variation>T</variation>
    <location>
        <position position="7450"/>
    </location>
</feature>
<feature type="sequence conflict" description="In Ref. 5; AAC23965." evidence="19" ref="5">
    <original>G</original>
    <variation>A</variation>
    <location>
        <position position="7454"/>
    </location>
</feature>
<feature type="sequence conflict" description="In Ref. 5; AAC23965." evidence="19" ref="5">
    <original>D</original>
    <variation>G</variation>
    <location>
        <position position="7525"/>
    </location>
</feature>
<feature type="sequence conflict" description="In Ref. 5; AAC23965." evidence="19" ref="5">
    <original>T</original>
    <variation>P</variation>
    <location>
        <position position="7532"/>
    </location>
</feature>
<feature type="sequence conflict" description="In Ref. 3; CAB93524." evidence="19" ref="3">
    <original>A</original>
    <variation>P</variation>
    <location>
        <position position="7537"/>
    </location>
</feature>
<feature type="sequence conflict" description="In Ref. 5; AAC23965." evidence="19" ref="5">
    <original>V</original>
    <variation>A</variation>
    <location>
        <position position="7552"/>
    </location>
</feature>
<feature type="sequence conflict" description="In Ref. 5; AAC23963." evidence="19" ref="5">
    <original>KI</original>
    <variation>EF</variation>
    <location>
        <begin position="10456"/>
        <end position="10457"/>
    </location>
</feature>
<feature type="sequence conflict" description="In Ref. 3; CAB93524." evidence="19" ref="3">
    <original>VPYE</original>
    <variation>LPFQ</variation>
    <location>
        <begin position="11204"/>
        <end position="11207"/>
    </location>
</feature>
<feature type="sequence conflict" description="In Ref. 3; CAB93524." evidence="19" ref="3">
    <original>L</original>
    <variation>I</variation>
    <location>
        <position position="11217"/>
    </location>
</feature>
<feature type="sequence conflict" description="In Ref. 5; AAC23964." evidence="19" ref="5">
    <original>V</original>
    <variation>T</variation>
    <location>
        <position position="11444"/>
    </location>
</feature>
<feature type="sequence conflict" description="In Ref. 5; AAC23964." evidence="19" ref="5">
    <original>DG</original>
    <variation>KK</variation>
    <location>
        <begin position="11460"/>
        <end position="11461"/>
    </location>
</feature>
<feature type="sequence conflict" description="In Ref. 3; CAB93524." evidence="19" ref="3">
    <original>Q</original>
    <variation>H</variation>
    <location>
        <position position="11863"/>
    </location>
</feature>
<feature type="sequence conflict" description="In Ref. 2; CAB96531." evidence="19" ref="2">
    <original>K</original>
    <variation>T</variation>
    <location>
        <position position="13709"/>
    </location>
</feature>
<feature type="sequence conflict" description="In Ref. 2; CAB96531." evidence="19" ref="2">
    <original>KSP</original>
    <variation>ESR</variation>
    <location>
        <begin position="13713"/>
        <end position="13715"/>
    </location>
</feature>
<feature type="sequence conflict" description="In Ref. 2; CAB96531." evidence="19" ref="2">
    <original>Q</original>
    <variation>S</variation>
    <location>
        <position position="13723"/>
    </location>
</feature>
<feature type="sequence conflict" description="In Ref. 10; AAM11102." evidence="19" ref="10">
    <original>D</original>
    <variation>K</variation>
    <location>
        <position position="14433"/>
    </location>
</feature>
<feature type="sequence conflict" description="In Ref. 10; AAM11102." evidence="19" ref="10">
    <original>S</original>
    <variation>K</variation>
    <location>
        <position position="14436"/>
    </location>
</feature>
<feature type="sequence conflict" description="In Ref. 2; CAB43739." evidence="19" ref="2">
    <original>V</original>
    <variation>A</variation>
    <location>
        <position position="15987"/>
    </location>
</feature>
<feature type="sequence conflict" description="In Ref. 3; CAB93524." evidence="19" ref="3">
    <original>F</original>
    <variation>C</variation>
    <location>
        <position position="17206"/>
    </location>
</feature>
<feature type="sequence conflict" description="In Ref. 2; CAB96427." evidence="19" ref="2">
    <original>E</original>
    <variation>R</variation>
    <location>
        <position position="18065"/>
    </location>
</feature>
<accession>Q9I7U4</accession>
<accession>O76275</accession>
<accession>O76276</accession>
<accession>O76277</accession>
<accession>O76278</accession>
<accession>O96767</accession>
<accession>O96768</accession>
<accession>Q7KA82</accession>
<accession>Q7KAJ1</accession>
<accession>Q7KPQ8</accession>
<accession>Q7RTL4</accession>
<accession>Q8T3N3</accession>
<accession>Q9N2P7</accession>
<accession>Q9N680</accession>
<accession>Q9N9Y5</accession>
<accession>Q9N9Y6</accession>
<accession>Q9N9Y7</accession>
<accession>Q9NFS3</accession>
<accession>Q9NJP4</accession>
<accession>Q9NL88</accession>
<accession>Q9UB79</accession>
<accession>Q9W055</accession>
<accession>Q9XZT9</accession>
<evidence type="ECO:0000255" key="1"/>
<evidence type="ECO:0000255" key="2">
    <source>
        <dbReference type="PROSITE-ProRule" id="PRU00114"/>
    </source>
</evidence>
<evidence type="ECO:0000255" key="3">
    <source>
        <dbReference type="PROSITE-ProRule" id="PRU00192"/>
    </source>
</evidence>
<evidence type="ECO:0000255" key="4">
    <source>
        <dbReference type="PROSITE-ProRule" id="PRU00316"/>
    </source>
</evidence>
<evidence type="ECO:0000256" key="5">
    <source>
        <dbReference type="SAM" id="MobiDB-lite"/>
    </source>
</evidence>
<evidence type="ECO:0000269" key="6">
    <source>
    </source>
</evidence>
<evidence type="ECO:0000269" key="7">
    <source>
    </source>
</evidence>
<evidence type="ECO:0000269" key="8">
    <source>
    </source>
</evidence>
<evidence type="ECO:0000269" key="9">
    <source>
    </source>
</evidence>
<evidence type="ECO:0000269" key="10">
    <source>
    </source>
</evidence>
<evidence type="ECO:0000269" key="11">
    <source>
    </source>
</evidence>
<evidence type="ECO:0000269" key="12">
    <source>
    </source>
</evidence>
<evidence type="ECO:0000269" key="13">
    <source>
    </source>
</evidence>
<evidence type="ECO:0000269" key="14">
    <source>
    </source>
</evidence>
<evidence type="ECO:0000269" key="15">
    <source>
    </source>
</evidence>
<evidence type="ECO:0000269" key="16">
    <source>
    </source>
</evidence>
<evidence type="ECO:0000303" key="17">
    <source>
    </source>
</evidence>
<evidence type="ECO:0000303" key="18">
    <source>
    </source>
</evidence>
<evidence type="ECO:0000305" key="19"/>
<evidence type="ECO:0000312" key="20">
    <source>
        <dbReference type="EMBL" id="AAC23966.1"/>
    </source>
</evidence>
<evidence type="ECO:0000312" key="21">
    <source>
        <dbReference type="EMBL" id="AAF47604.1"/>
    </source>
</evidence>
<evidence type="ECO:0000312" key="22">
    <source>
        <dbReference type="EMBL" id="AAG40155.1"/>
    </source>
</evidence>
<evidence type="ECO:0000312" key="23">
    <source>
        <dbReference type="EMBL" id="AAM11102.1"/>
    </source>
</evidence>
<evidence type="ECO:0000312" key="24">
    <source>
        <dbReference type="EMBL" id="BAA90301.2"/>
    </source>
</evidence>
<evidence type="ECO:0000312" key="25">
    <source>
        <dbReference type="EMBL" id="CAA09971.1"/>
    </source>
</evidence>
<evidence type="ECO:0000312" key="26">
    <source>
        <dbReference type="EMBL" id="CAB76253.1"/>
    </source>
</evidence>
<evidence type="ECO:0000312" key="27">
    <source>
        <dbReference type="EMBL" id="CAB93524.1"/>
    </source>
</evidence>
<evidence type="ECO:0000312" key="28">
    <source>
        <dbReference type="EMBL" id="CAB96426.1"/>
    </source>
</evidence>
<evidence type="ECO:0000312" key="29">
    <source>
        <dbReference type="EMBL" id="DAA00021.1"/>
    </source>
</evidence>
<evidence type="ECO:0000312" key="30">
    <source>
        <dbReference type="PIR" id="S35341"/>
    </source>
</evidence>
<sequence>MQRQNPNPYQQQNQQHQQVQQFSSQEYSHSSQEQHQEQRISRTEQHVQRSQVTTQRQVQQHHGGSIGGAYVPPSLTHVYAQGDISPPVFEQIFKNARFAQGGNALFEGRLRGNPKPFVTWTRKGAPLLESQKFRMSYNEATGDVSLLINQIGPGDEGEYTCTARNQYGEAICSVYIQPEGAPMPALQPIQNLEKNIYSNGYSYTSIEEEFRVDTFEYRLLREVSFREAITRRSGYEQDSQLSQELDRNQGPAQAPQISQKPRSSKLIEGSDAVFTARVGSNPKPRLTWFHNGQRLVASQKYEISYSSGVATLRVKNATARDGGHYTLLAENLQGCVVSSAVLAVEPAAETAYEPKPVDVMAEQLEAGKALPPAFVKAFGDREITEGRMTRFDCRVTGNPYPEVFWLINGRQVRDDASHKILVNESGSHSLMITNVTRLDAGAVQCLARNKAGEVAIEAQLNVLEKEQVVAPQFVQRFSTMTVREGEPITMSANAIGTPQPRITWQKDGVQISSTAERFVGIDGGATCLEIPRVTANDAGWYQCTAQNIAGSTANRARLYVEVPREQPNYEQRRLNLPRPTKVIEPEPIPGPEIIYLRHVERAKPHLRPGEEDRVYPPPQFIIPLQNVQQTEGGRVHMEARIEPVGDPTMVVEWYLNGRPLAASARATSVFKFGFIALDLLSIMGHDSGEYMCRVTNASGVAESRAILSVVQRPSIEQSSQNPNSLQYINQLEDYSRYQRTESIDEQLNQAPQFIRPLRDLGEFEEGKNVHFEAQVTPVNDPSMRVEWYKDGLPITASSRITAIFNFGYVSLNILHLRAEDAGTYTVRAVNRIGEAISQSSIRVHSRSQVTADLGIPEQQRYIEKVEELEDYRKSQQRRHVQEAAEAIAPPQFKTPIQNQLDLREHAHAHFEARLEPVGDSTMRVEWLKDGQPLEASSRITTYHNFGYVALTIKQLTIYDAGTYTCRAYNAMGQDTTVAQLTVISKNEIVSESQHPGGLQKIQHLEDSSRYGRREEEETYITQAPRFLGPLKGTTKILEGQRAHFEARVEPQSDLGLVIEWYHNGRSITAANRIQTYYDFGYVALDISQVRAEDAGVYLVVARNKLGEAQQQATMIVETRSSIDTSSMHRGLYEKTQNLENKPFVEPQYDIEEISKSKPVFVTPLSDPKPIHDGKNIHLECRLEPMGDPTMRVEWFHNGRPVTVGSRFRTYYDFGFVALDIIKATAADSGEYTVRATNHLGTAHTSACVRVIDHTDVVTETQNEQSLEQIQLLEDSRRRHHQEEDITIMQAPQFTRGLHNIETIEGTNVHLECRLQPVGDPSMRIEWFVNGKPVKTGHRFRPAYEFDYVALDLLGCYAIDSGVYTCQARNQLGEAVTSCSVRIIAKNDLILETQNESGLQKIQYLEDSTRHRRSEFVDEVVNIRPRFLTHPKSLTNTREGGHAHFECKIEPVTDPNLKVEWFKNGRPITVGHRFRPIHDFGYVALDIVHLIAEDSGVYTCRAVNLIGSDETQVELQCRSGEQIVTVTQNEAGLEQIHYLEDRSRYTRREEIDESTKQAPVFTTSLKNVEIKENQRAHFECRLIPVSDPSMRVEWYHNNLPLKSGSRFTETNNFGFVALDIMSTLPEDAGTYTCRAYNAVGEAITSAVAVVHTKKSIYLESQHETALPRLQHLEDGSKRQRISVQDEFVSQAPVFTMPVRDVRVAENQAVHFEARLIPVGDPKLTVEWLRNGQPIEASNRTTTMHDFGYVALNMKYVNPEDSGTYTCRAVNELGQAVTSASLIVQSKTSIQLETQHEAAMHKIHQLEDHSRYQRREEEEYTVTTAPVFVTKLIGPSNLVEGQSAHYECRIEPYPDPNLKVEWFHNGKPLSTGHRFRTTYDFGFAALDILTVYAEDSGEYTCRVTNNLGEAINSIVLNVTSRSSIIHETQHEEALTKIQHLEDTSRFQRKTDEEQFHAERPQFGRPLRNAKVNEGAPVHLEATLIPVNDPTMKVEWYCNGRPIQTGHRFKTTYDFGFVALDILYAHAEDTGTYMCKAKNAIGEAVTTCAVNVTANKTLDLDTLDAQRLEKIRQLETYAPPPKPVVEEKGQKPIFLTPLSNLEHLKEGEHAHLECRVEPINDPNLKIEWFCNGKQLPTGHRYRTTHDFGYVALDILYVYGEDTGTYICKATNQLGEAVNTCNVRVLNRRSMILDTQHPDALEKIQKLESKVPNARTEVGDAPISPPHFTAELRGSTEIYEGQTAHFEAQVAPVHDPNLRIEFYHNGKPLPSASRFHITFDFGYVSLDITHAVAEDAGEYSVRAVNALGQAVSSTNLRVIPRGTIISDTQHPEGLEKIRKLESTAPHQRQEPETPGTRQRPVFTQPLQNIDRINEHQTAHFEARLIPVGDPNLKVEWYRNEKIIEDSSRITKQHDFGFVSLDISHIRKEDEGVYMCRAVNPLGEAVTTASMRVVSEASIQMDTQHPDSISRIHQLEKPLAPRPTEPERLFEKPIFTQLLTGPSELWEGTHAHFEARVVPVGDPSLKFEWFINGVELQMGSRLRTTHDFGFVTLDITAVVPEDAGVYMCRAYNAAGEAVSSTAMKVKTKSNIDGQPLIPESWEAIRLKEAAMNRVPEMFVDSTPQQAPVFTTHLQSYDKLHEGQHVLLEAQVEPRADPNLRIEWFKNGISLTTGSRIRSTFDFGLVTLSINGLRADDSAIYTCKATNQVGEAVSTSSLKIEDRHWLQAESLHPDSLPRIGELEAPKEGRPEAPEPTYETPVFITHLNNIECKESDNVRFECNVEPARDPTMSIEWFYNGQPLQAAAKFKSIYDFGYCALDLTNSYAENSGVYTCKATNSKGSATTSGTLKCTGGKTMFLDTQHPQGEAGLEAVQETEEELANRYTSKTTKPETQYPPPVWTKPLQAEFHLSEAQPIHLEANVEPKEDPNLFIEWYFNGKMLNHGSRFKMTSEFGFVTMDMIEVYARDQGIYTCKAYNKAGEAFTSTTIFCSSKENIIESTQHPKGAEGLEQIQDLEDSLRKDGSKPEQPDLGIPPRFTTEFVNIADIGEGELAHFEANLIPVGDQSMVIEWFYNGKVLEASHRVRTIYAFGTVALEVLGTKIEDTGTYTCRATNKHGTAEISCNLECVDKPRGQKPRFTSHIQPLEGLKDGQSAHFECTLIPVNDPDLKVEWYHNGKLMRHSNRIKTVSDFGYVVLDISYLQDHDSGEYVCRAWNKYGEDFTRTTLNCGGRGGVFYDSLQPDSLQRIRELECPQGQQADTSAPLVAEPPKFITQIVDVTKLVEGQSAHFEARLTPITDPDLVVEWYFNGKKLPHGHRFRTFHDFGIVILDILYCYEENSGVYEARARNKYGEDVTRASLKCASKSSLILDSQLPRGMEGGLEKIANLEYSMVRTREETTEETKGKAPVFTVPLENIENLREGENAHFEARITPADDPKLKVEWYWNGRPLKAGSRFRTFCDFGFVILEISPVYPEDSGEYSCRAINEYGEAVTTATMKIQGKRSIIMESQLPKGMEGTIDRIAELEGLGSRSTEFVPDDDTGKPPEFITSPFDMVIGENALAHFECRLQPINDPSMRVDWFHNGKALWAGSRIKTINDFGFVILEIAGCYQRDSGLYTCKATNKHGEATVSCKLQVKGRQGIVMEPQLPSNFRTGTESLQKLEETMHKREELVTEDEQPNPPKFTEEIKDNLDVPEGGPIHFDCRVEPVGDPTMRIEWFYNGHVMATGSRVHQLNDFGFIALDVDYIYARDSGEYTCRATNKWGTATTSAKVTCKGKHNIVYESQLPEGMTSEKLKELERGRIPEAPKVVEEVFGPPKFTTQITSVTVDEAEAVRFECQVEPKTDPSLRVEWYRNGKPLPSGHRYRNIFDMGFVSLDILYVYGEDSGEYVCRAINNYGEDRTRATVSCKKLPTILLQNQVPRGMKRSDALTQMEATIKKYTSEVHLTEDDLFDPDRKQPPRFVTQIKEQLTLTEMAVTKFECQLAPVGDPNMKVEWFFNGKPLLHKNRFQPIYDFGYVAMNFGWVYPEDSGEYVCRATNLYGKDETRAIIKVSGKPGIVYDSQLPAHMQSIDRIREMEASWQVVPDEVDPDAKPRTKPVFVSKLEPQTVEEGDPARFCVRVTGHPRPRVMWLINGHTVVHGSRYKLTNDGMFHLDVPKTRQYDTGKVEVIARNSVGESIATTELKVVARSDDYRNVLKNSPRPWYDYELAAYQKERQENELEKVFDERKQVLSEQSSHTLKGVEHLKPKQYKPPTPDWQQNVKAKKSEDYYNKLQTLETEQLLKETNLRRDTHQYAIPGEKVVSSSQAKGMAQSYEENLQEKTSTTEVQAAPPKGIAQPSESSVHGREVHMNKQQQVQKEIQGDLEITRKITATETTEVEHKGTIQERVVQGPVKPAKAPVFTKKIQPCRVFENEQAKFEVEFEGEPNPTVKWYRESFPIQNSPDLQIHTFSGKSILIIRQVFVEDSAVFSCVAENRGGTAKCSANLVVEERRRAGKGGIQPPSFVTTIQSTTVATGQLARFDAKVTGTRPLDVYWLKNGMKIQPSIKFKMLEEDSVHTLLIIEPFAEDSGRYECVAVNAAGEARCDGDCIVQSPSKPEKPTTPGSEKAPHIVEQLKSQTVEEGSKVIFRCRVDGKPTPTARWMRGENFVKPSRYFQMSRQGEYYQLVISEAFPEDEGTYKCVAENKLGSIQTSAQLKVRPIENLDAPPTITALKDVSVTEGMPAQFKTTVTGKVKATSVQWFREGQLIPETPDFQMIFDGNSAVLLIGTTYEEDSGIFTVRVTSSTGQVESSAKLTVKKRRISAFQLRTIDSAEDESSSSGREDSAPESPHAFQPGQQPGQQFGQFLGVNGQGQHQGRSRQKKPKVRSKSLQPATKVIPWRKSSRPTRGRSLDKGVFLPGFKPEPVKSWTEETINLKATPIEKKKPAPKLEAAKVVLKSIKTERDQGIMSLGATLEQIIAGKTEKEAIPWITMREKLKAVESVQQQLNKFDLDEVYLQPLEGQIETEGQLPQQAQVEQVQRTKEIQRLKSMESVEIMEMTDQIDKLITQQQNAKDLIPWKEMRQQLKSVQRVTKQIDKFKIEEVELRHLQAQQAITEEYQTGTAEETVVMIDESSKGSISKVLRRDEQLQYEDQSNIYKQKFITTEDVNIMHVSEREKLEAQRLIREQQAVNWRQQQQRPQLQPLTSVEDTVISQTSERQKLVQQQSFIEEAQRQQFVQVEDSQMMSLEEYEHQKIINQRTQQEAFSWRQPREPQKFIQVEDSTLLHLQERHDTQEQQLLQQQPVMWDRGRKKPDQPQYVQPQEQRVKEEFVEKPKTYEEMHDELVEPTPIEQPQPVPVMWERGKKKPQPQEKTFEEAHDELVEPTPVQQPEPVPVMWERGKKKVAQQETVLSQEVVQTSQVVEQQIVEETKKTAVRRVIPPREPEQKVEQVTLKPTPRPRPKEAVKAEEIQLKPLRSTRPVPQPVEAEQKAYEEATDELTEEPIPQPQPVMWERGKKKPQKPQEEVTEIPKTLEIAVDTLEEEVPKPTEPQPQPVLWARGQKKPQKPDEQKQELPKSLEIAVDTIEEDLIKPVQPEPQPVLWERKKKKPQPQDVIEEKLDVAPTKTYEKAVDVLPDEPKVEEKPEPVLWQRGKKKIPKSEPTEEVHPDEVDAQIETVVKEDEMIVEEKRRIKKTKRPKSTKEVTEELFEEQPEEEISPEEEVPQKEVIEEIEEIVEEKRRLKKTKKPKLTQQVTEEETPHEEIIKESEEVVQEQEEIVEEKKKVKKVKKPKTVAEKQLKEEEIPTEETVEEEETAEDQQLVVEESKKVKKVKKPTGTVEKTDVEELPGEEVPVEEVPVEEVPEDVAPEEELIEEQEEIVDQDEIQEQKRKVKKAKKPKKTIEKTEIEIEEDQPEEEVLQEEIIGEQEEITERQRKVKSIKKPKKVVTEKTVDQTEQPEKPEESQAEEVKETVTEEPKKPKPAPEEAKVEQVEKISLKPAPRKQRLLPEKEQVEEVLLKPVKKIVAVSEAEQPETPETEFEVKEFAITTTEDILDVTKKRVKKKKPKTKVAAEESTEEPAEETEEFEEEATQPEEVQPVEEIPEEPQVKEVADERKTAPKPKPRKEEIIEKVEEVALKRVTRPKKELPQEATIEEVRLKPTQRTSIKPEEVKLEEVDLQHVEKKEDEIVQEEKRKTRKVKKPKHEDLPEIPDAEPTQLEEAEHIELEKQPKPEEDQPQVPWKRGEKKQPVEEVLEEKKWPSGKRRPLPEQQPEEVQLKPIPSKPIEEQQKPEKAIPGPQLVPEEKPESEEEELELEPLKLPEDKKPKEPKAKKEKKKKPKLKKATPSVDEVSEEVAEPFDEPIAEEDEVEEMPVDDVKVVAVSEDVLPEEEVVPTEETPEAKQKAHKKRTKRLKEASVEGQPQLLEAAIAEIEKVDEISQEISQKTITLLKKTEDTRPQFITTEQLIELDVEDVRRDLEMKVTSNIIKKEKRRVVLDDSQPLPELELITQKRIQEGIDKVADEELIEDQQLIQNQQETTTSEVIGQERKLVKKKKKEIKPPRITEKLRPRQCVPEEPTVLECKVEGVPFPEIKWYFNDILLFASEKYEITVMEQVAKLKIAKVTPSDVGVYTCEAKNEAGVATSRTNIILEKEQGVPPQFTKPLKIEFIEEKQPERLKVTVTCQVTGKPNPEVKWYRGIEEVIPSETVQMFYDEKTGDVALEVINPTPNEAVVYSVQAQNQFGRAIGNANILSRVDEVPREILKAPTVTPLSAVVVPTGGTLFFEAKYDGLPRPEVKWMRNGREIIENEETIIETTETTTTIKVVNMTRKRTGKYEVWAKNKVGEAKSSGSVVVSDQKPDEQIKPPRFIQPLEPKYFGEHEVAIIEAIVESEPLSSFQWFVHNEPIKSSNEVRIVSQANKSTLLIENFQSKFVGPFTCRAENVGGSVTSTATVNLIPQEEAEEFESPRFVEELVQPVEVMDGEALLLTCQVTGKPTPKVEWYHNAEKITENKETTISQDLQGVCQLQITEVFPENEGQYECVATNKIGKSVSKTNVKIQAFEYIPDSEITGLTGSEEDLLDRTLSIDEQAPKIIKKLPEKIEPKEGEQAKLEVKVVGKPKPKVKWLRDDEQIFASEEYQIENFEDGTSVLVINHVYPDDLGTISFEAYNPLGVAVTTALFAVEGIVGSKDYRKPEWVSQMEEMQVALKAAKCSPSLLNEMRDCRAALGETAKFSIQFAGNPIPDIQWYFNNVQLRASEKYRMVVQEQEATLEIMKITSEDCGYYNCKLINEIGMTMTRAKFDISSTSTIVEETKAKTTVKKKSGKKTMVKRSGASESQNVQKTEIRIIPTSAVETSMNVIKVKQPVSVLVEKSEISEVLVVKDREVADAEERSSQLIEEIEEEEEIEEKVQHDEEDEVEVQVEQKETYTSSKKIEITKTVELIRTKISEKIITIEDVQVLSHHEEVQWLLESIEAESFGQIGESALRDLATIGLLLRYGCEHYEITYMYEQNIFISLKKPESQSALVQLVEREGHEELISQILSESSNEDETILAATVGFKAFIRMIQTYEITIEIVIRKFVREDFISQDWKICGKERIVETSQIIESHEAITHVKIETATTKVEKLFKKQEQEHVQNLEQQEQVKIQVQTKQIAQMNTKIKKHKKHKQQEQEVSETTIQCEQKETLAHETSAELPQSETLEQIEESLSTYETLPIQNLSKDTLQTVAVSVTTELSTPSPTASRVQEEILPQKVLAINEEVLPLDEFGLRKESPRPKENKLTENIEVRLKHALNVSHAKTAESSKELPSKIPKSVKAQRKMKESRSLVVEAPNAEEAIEDLKPLKAVSQEVQSDILFSHEITEEQHQALETIEKLKPTSAIEDTVQQKLLSQEELIIAEVLPSETVGRDVTDVRPPGETISPRLTPNMSLCITECQPEDSIGEMQQAAKERMETPSMSVTESKAVGGQELEVLENVDHMPLITQPTKGLADYTIKAEEVPVQVQEIITFDSLERETVAKTQTAKSNALELFELSEGLVSSTADSHSPIAEDLPIFEKDVKEATIDMQMQHHVTTSETVSNENAVKDLKAVDTPKMAEGTLGQSSALTIGETQQMNLVETTVELIEPNVESTKPAKGALTEAYGTAESNEETLLESLGLVPDDNRKIEQGKVNISEGEYVAKVQTTTVTDTEGEFVSVAPKLVNPKFDFVEQSALQIKQDTTVEKEEILSSNIELAPQLATSNMFPAELKVTSIYEVQPGLTSSDIITEQTKSVSANQVFETMSIGVTSKPDMLESTSHIDAFQHPEFKTGDTILDENQQPLEVTNVQITESSTDIIDVLPNQKLTKAETVTDGFKYAEGLVVLPMESTIDKTEDTKPTAVNADISMHQQFGTDVREQEPLESTLTRTEDLKPQTQTTESQFGLLQSLETSSCVTLEGESVLSVKERHPEQSAAIGTSSALQVANITRPQHMESLDRLDEQKVPYYQANVNIGEITLPNVEKIDSFDVLSDLNTPDYNKSSKGRVQLIESTTSLKTTTAVVSESTEELKDLNITQPVHIKPKPYESDQKISISEQTNVLEHVSSLNPVLPALETIQSSIKSLHEINVRETDILEKEESLKDVDHISGRLAKIILDCTTGIAQVRQEETLEHEEDLKAPLIPLEKAIPASSELHRLPLTEYVQEQQGTSDMTDFKVSNKCASPNIDHLYETKSSEMIVYDSSINSVDSEFPAGIVPQKSLVPFRHTMVTENVAFNASENFEILSADQQIATNVQDSLSQSIIAEDQIAFETEQNLGLETTPTHKPKLLKDDQNLHAKLVDEATVYEAMGQEQKVDKYNIQQAEITHDLPQVYATDLQQTFEAEKEITTREQSYVAATTDIIPSRLGLAMTTKTHPVEGIDVLLSSPPKPSLAQTNYEETQHEVRVRETQAIEESEELTDGRLLPVSAVESIDSTFKVTSDSQQPPVFDKELSIPTVSPLEARAKPSLNLLQGTTTFDVIPLESSVLLKDTHVAVQKAQQEYVAQVESNKVHVQMDNLVMHKEDIFENAEIENFCKPITEGTQLETVVIEVVPIDNVGGIHLAPQPSTLLATLTSTDIVNQSHVIDTQVPLEMESEAQAPLDNIAQARIKSAEDHVHTNVSEVNVYEQTKAIQDQNKHGLFVKVSKNSDTSKAYLTTIQSTFLKEDILPKPNILQDTAQAAADELQSLVTEEVVSVSSIQETYELKIPLQKTANLTQQTPQNSVNVCQQLAYEETPDIAFEPHALTRATTSSVPTFLKPAENATVNIYENIEGHGDFKPGTVNLTSNSNLNSELVVSVVQEVTSVPSLGSLATVEPQELKAMPVTKSSTNLAYSEEVKGNKQEFTKIETVEEDDKQPETTVTVEELPYEEEKPEEIQELPEEVCVVETVTEDGKPKKKKIRTRVIKKVKGDKQEVTKIETVEEDDKQPETTVTVEEVPYEEEKPEEIQELPEEVRVVETVTEDGKPKKKKIRTRVIKKVKGDKQEVTKIETVEEDDKQPETTVTVEEVPYEEEKPEEIQELPEEVRVVETVTEDGKPKKKKIRTRFIKKVKGDKQEVTKIETVEEDDKQPETTVTVEEVPYEEEKPEEIQELPEEVRVVETVTEDGKPKKKKIRTRVIKKVKGDKQEVTKIETVEEDDKQPETTVTVEEVPYEEEKPEEIQELPEEVRVVETVTEDGKPKKKKIRTRVIKKVKGDKQEVTKIETVEEDDKQPETTVTVEEVPYEEEKPEEIQELPEEVRVVETVTEDGKPKKKKIRTRVIKKVKGDKQEVTKIETVEEDDKQPETTVTVEEVPYEEEKPEEIQELPEEVRVVETVTEDGKPKKKKIRTRVIKKVKGDKQEVTKIETAEEDDKQPETTVTVEEVPYEEEKPEEIQELPEEVRVVETVTEDGKPKKKKIRTRVIKKVKGDKQEVTKIETVEEDDKQPETTVTVEEVPYEEEKPEEIQELPEEVRVVETVTEDGKPKKKKIRTRVIKKVKGDKQEVTKIETVEEDDKQPETTVTVEEVPYEEEKPEEIQELPEEVRVVETVTEDGKPKKKKIRTRVIKKVKGDKQEVTKIETVEEDDKQPETTVTVEEVPYEEEKPEEIQELPEEVRVVETVTEDGKPKKKKIRTRVIKKVKGDKQEVTKIETVEENDKQPETTVTVEEVPYEEEKPEEIQELPEEVRVVETVTEDGKPKKKKIRTRVIKKVKGDKQEVTKIETVEEDDKQPKTTVTVEEVPYEEEKPEEIQELPEEVRVVETVTEDGKPKKKKIRTRVIKKVKGDNQEVTKIETVEEDDKQPETTVTVEEVPYEEEKPEEIQELPEEVRVVETVTEDGKPKKKKIRTRVIKKVKGDKQEVTKIETVEEDDKQPETTVTVEEVPYEEEKPEEIQELPEEVRVVETVTEDGKPKKKKIRTRVIKKVKGDMQEVTKIETVEEDDKQPETTVTVEEVPYEEEKPEEIQELPEEVRVVETVTEDGKPKKKKIRTRVIKKVKGDKQEVTKIETVEEDDKQPETTVTVEEVPYEEEKPEEIQELPEEVRVVETVTEDGKPKKKKIRTRVIKKVKGDKQEVTKIETVEEDDKQPETTVTVEEVPYEEEKPEEIQELPEEVRVVETVTEDGKPKKKKIRTRVIKKVKGDKQEVTKIETVEEDDKQPETTVTVEEVPYEEEKPEEIQELPEEVRVVETVTEDGKPKKKKIRTRVIKKVKGDKQEVTKIETVEEDDKQPETTVTVEEVPYEEEKPEEIQELPEEVRVVETVTEDGKPKKKKIRTRVIKKVKGDKQEVTKIETVEEDDKQPETTVTVEEVPYEEEKPEEIQELPEEVRVVETVTEDGKPKKKKIRTRVIKKVKGDKQEVTKIETVEEDDKQPETTVTVEEVPYEEEKPEEIQELPEEVRVVETVTEDGKPKKKKIRTRVIKKVKGDKQEVTKIETVEEDDKQPETTVTVEEVPYEEEKPEEIQELPEEVRVVETVTEDGKPKKKKIRTRVIKKVKGDKQEVTKIETVEEDDKQPETTVTVEEVPYEVEKPDEIQELPEEVRVVETVTEDGKPKKKKIRTRVIKKVKGDKQEVTKIETVEEDDKQPETTVTVEEVPYEEEKPEEIQELPEEVRVVETVTEDGKPKKKKIRTRVIKKVKGDKQEVTKIETVEEDDKQPETTVTVEEVPYEEEKPEEIQELPEEVRVVETVTEDGKPKKKKIRTRVIKKVKGDKQEVTKIETVEEDDKQPETTVTVEEVPYEEEKPEEIQELPEEVRVVETVTEDGKPKKKKIRTRVIKKVKGDKQEVTKIETVEEDDKQPETTVTVEEVPYEEEKPEEIQELPEEVRVVETVTEDGKPKKKKIRTRVIKKVKGDKQEVTKIETVEEDDKQPETTVTVEEVPYEEEKLEEIQELPEEVRVVETVTEDGKPKKKKIRTRVIKKVKGDKQEVTTIETVEEDDKKAETTVTVEETELSAPSVGKVQLKKRVIVQKPEDAVTVFELPERKSVILSEKEDGTPTKTVIKTRIIKKIQGPNMEVTKVQTVEEYEKAPQTIVSVEKFNTPFPELPEERLSEVVMLPDEVFESEAVDEEGRLKMIKTKKRIIRKPALDNTEEVTEIGIIEQDNVEPIYSVKIQERPLTESKPEDSKLIELPEHVTELNVILPDGKKKRRTVKSRAFKKSLDDDLDEVTTIHIIEEEDKEPLTKVNIEVVPSDEISITPIPIEELPEETVFTEELDENKKPKKKTTKTRTFKKRGPDDDEYFQIQTIDEEGKEPISLIRVVSDENIADIIDISKLDDEKVLKHKQKPHKHKDQYYKEYTITEPEEASADALQKPTKDKTPKQKKTLETPIEEVDETVIIDEGTGEQTDQIAIKRKPRKVQGNVQVEAVDEKPIEKKEKAKKKKVVKTKRDEMDDYIQFLIHQEIPKTVLQPYQRTEMELPQRARRDSSFKQPVKLTPMKIEKVEFKKPKMVEISSVVEFPQMLKLKAPKQRPQEEKKKKNEASFKNKKLKSWIRFVPYAPYCFPYVVTELETNREVGELSRNVDEAEEVLKLRPKKFKHSKPEKAELEEADLGAYESDHSDKSNKELLHPKYKRGKKEKIETPDESRKLKFGKGKVPQNEEASEEVNLKPVKLDIAEIEDAEMPVRTQEEEVVKKKKPKKSSKPEEGLQFEPIEFEEMERTSDIREESDTSVSVDTSTQEKPIYKKKKKVTPSPQKNQYKILPGQPREFEETPEDDLNLRKRQGERPDDDKADTKLKPFYKFEVLDLEPEGVQAETVPLSETIAKEPKKKRKIKVKTEQEDNTIEIVPLSPEDNDEQIFEITVTSSEIPQGDAKAKTIGKKKVKRMNKQELDDFVTELQEEPNQEVYETRMSDFYEVKLTELPSEMDSDKPTKRILRHEKGDEVQVLEIVESVVAPGEEPFYEINVISSANTEGDSEEITTDKIKKKSRKIKKDDLDAYIQQLINAEIPVTELEKYEKIDVDGKAKKPKKLKAKTKKPIIDEGETLQVGVTEHEPTKKLKTKKPEEKKNVIEKELAEHEAVPEYDEFLINKTESERPQEKRVEETEKDIVPIVDKVLADLNDCLPFVVVEEDLKDMPLATDVIALEDEKIIRKRKVRAKKDSKQYEIEIIETEKPGDIPDEARVIVITTEVSGDTIDGPAPSTTEAPKKSVRKVKKEKLKEFIVNIVEEAPLDHVSEIYEDVLRTPFRESSEKEDIPSFTTTVVEDEIVNPVLPEKIKTVDDVRVPKDKKKKIDNQKKIKISEFEPTPTSEDSTIEEYTPKLSEHDEDLQTDEYSVDVKDSLPKSKKKSTKKQKKESLPGPISLYTIRIEETTPEPITEKIYEDGKEVVRVINKRRIKKKAGPKEYLIEVIETYEDNNPEADVVIRTIETTPSIDSKPQEDHKIQVVQEKKPKTESLDNYIQKLIDQEIPQVDHKEFKATVLETSPESKKAKKIKKHHKKTTEVIDGIPITVIEVTIQETETDDEDFKPDEVTLKEIDHENAEEAPKVLKSKVSEEKPKSKKEKSLEFKIAEEDKPKPVLEDISEDVQVVQIIEEDGTPKQVEIKKKKVSRKHGPKEQVFEITETKAIDEPLSEVTVVEITDEQPQEEVLPAQEKKPIKKQKKLKPEDVNTYVVKVLEELTEPTQFETIPEDADDKPQPVIEDISENVQVVQIIEEDGTPKQVEIKKKKVSPKHGPKEQVFEITETRPSDEPLAEVTIVELTEEGLNKDIVIPQEKKTVKKPKKLKPEDIQSYVIRVLEEFNEPQWPASTEKPIIEDIAESIEIVPVTEEDGITKEVEVKKKKVSRKQGTKNQVFEIIETKTSDEPLAEVTILELSGDKSQEVTILPKEKKPIKKTIKLKPEDVESYVVNVLEEFCEPQSFESPEPTEGEAHETKTKTKKPKKPIVKAPENVILIEEMAPETVIENIVNEIGEEVKQVKTTKKLKKKEGPKEYLIEIKETYEENKPEGDIEITTTELVPEGSPDASDDQPVIVVQKIKKKKPVKDDLDKYIQQLIEQEITKTPLEEYEPTEMDSKKKPKKKVKSHNKKTIEVIDGLPVTIHEFNVEDIVSEPEDMETPKTLLDEIKEIPQLPDDSSKYLVNISDEFGEADKPIKQPTQDQPIKKEKPLKKKKDVEYPVSLEAFDHTVKVVSEPTLEGTVKEVTVKKRKVSRRKGSKDHIFEITETTSEDRPTAEVTVVELSSDEVLDSEEKPKHERKIVKKPKQLKKDDVEEYIINIIEEFIQPIPVGLVEDEVEKVQKEETKKPKKSPITYIATEQEDNDNNYDALVKEDLDQPIERALEKPSSPLEYTISVEEDSVGEEQKQPKPKKISKPKSIKQPSVDKSPDYLVNVISEESIIDEPIPEDYVVTEAAEEKPSEEPTFKVEELETEAVEKEVTDDDKGETTKQSVTKRKIKKLVGPKEEIIEIVETKTGDTPEYEVIVTTEEVQEKSKEAPEEKKAKTVRKAKKIPKDDLQDYIQKLIEQDIPKTELEKYEKIDLDEPVKMKRKPIKKVKQSEEQPKEETEEPIEDKPVEKISEYSEVDSDEPKLTVAVKEFIPEKPEEKPFEIVVLEETVESKREPDEEGKVREKVVKTKKIKQNRGSVEVVHDIVEEIDTDTNESVITVTTTVPTETPDQDQPSVKQKRTKKIKKDEVEDFVKRVIEEEAPQPEGSVDLVVIEDFVPKPSSEKRKKKPIKDKHTSVEEETPHEDEVLLIESVPEDSPLSDDLITVVDSVPIEEEPENKVNQIEDTKKPEKKKKPKPSAKILEENVPEDTVEKPLEALHTDSDLEKPDVQEFSISIKEEEQKHTHPEKKKSSKISSEQPKQPSTEQYEISVTEHDLKPEEEKPFTVQVIQSETNVEETKDDTGKVHKQVTTKRMLRRPAGEGEIEIIEVVRDDQPEAEITIVEYEPEPVNQDEKPKEPKKKTRKVKKDDIHDYIQKLIELETPKTELEKYEKIEFEPIVKDKPLDSPIDVLDESPKEVQKKDKKSRSTKVPNEETPVQEQYAKVNVVEEEAPEQPEIPVQILEVKPVEVDVKEVITEDGKPVQEKTTKRVLKKIGPEEQTTFKITMIESEDNDSVTVIVDEEPEIASPQSIEEHPEQSKEKLAPKPKKTVRKVKKDDLSDYVKKLIEEEIPKVDLEKYEKVEMPEKPVKLTVSDSIPEEPKPDKSQPISVLPDTTKPKKTKTPKTPKTEDTDQQVPDEPTETTVDTTDIPELTPTQTAQPEDTATAQITPSAQEEKSTQDDTKDTIQKTVKHKKTKPDTQKSVETSELPEVHKDYQISIIHEELVEEEQPEKILEVRVIDEVAEVEESQPIVEEVEDEEPQPATEETVEDVTKPKSKKKKVVKKKTDDHDELIKKMLEQEIEKTELEKYEKIEFDVPKKLKPEFAALEPIKIERKEQKPTKVTILDATDVPKTVKLKPSKRKEKPAEELTVQLPKFRLKARMVLVEYPPAPLIPKTTDIGAIKDNGELSRNIEEAEEILKFKPHKTKKIKKIKDDLEKVELEKYEKYISSEEEPEEKTPYKKPEKAPKPEEKQEDVKLKLGKGKKKPKEEEAPENVTLKNIPQKPQEVEEEVELKQKPKEVEIVEEQTKKPKDGEFVVEPFEPSEFDRPEYVPDELEQIEHPEIPEKVKKPSKTKYKPKDKSKSEPETIVSEIVAGVPKEEEAIPEQDVKFRKPERDAPEETDSEIKLRPVPQASKDENPDEQALVTPKAEEPIPQEIEDKAIDDEKKPKKSKPKKVQPKEQEIAKEEPEEFEVSVKEEEALVDKPIEIEKPKDVKVKEKKPKEAPVSEVVVIEEEPKPEEVPEEIPVEYKITTTVLEPEDAPKEHQVKVIDFDERQETTEEVIEEKVVTRKKKPKPQQPEEFEVTLKEPKEEQIQPDVVSAEISLPIEEPEQKPEQYEVELKITQTTPEEPNDVQIAVKEKVKTKPVKKVKEDKIVVVEAEEEKQPVEETIVEVEKQEEKKKSEKPKSYEFKISETQSIEEKPIEVAEEAPEETPKVVEKKVAEKFDSYEFTLKETDEEKVITVDDQPEEEAPVEVVFKKKPKEPEAVEAEFVMTEPKIVEETSVETAIKQKKTKKPKKDEEEAQLAIKVVESEAPVAEEVFSEAPESKIVEEEVIAEEKPKEFTIRVSESEPKPEEPSVEQFTVKKRKPSVTFADEPATEIVIKESKPAEVVTEDAHIKTKKPKKKVTDVEAEELKIKITEEVPQEIPILEEVSEEEVITETKKTAPVVEEKTYKIGIKETEPEKPAEAIVEEEEPVVTEPIEEAPKPEVFEEHKVRVIEETPRELVEEVIEEEVKVIRRKKPKPEIKEEPEAEVTVSTPKPVEEVEATSSIAVIPEQPTEEEAADLKITIIEEETPPQELVQEIEEIEIVEEPKAPEEQPTDFTFATKDSEKKPTVEELPEEQVTIQKKKKKAPVPEVVEEPEAEFLVKPKTPVQEVTEEAKITKSKKPVKEEEAAAELKVTITEEIPTEPEVQEIIEEIEEIEEEKPAEYVIEVKESQPEAVEDKEVSLPKKKPKAPIVEEPEAEITLKPKVKSEEVQEEAKIVKKKPKKIDEVAVADELTVKVEEEVVPEPIVEEEVIEEFEIKKKPKEPEPEDIVDAAIVKLKKPEPVDADEVVAEVTLKPKAKTEVTEEEFSVDVKLPKEKKERPVEIEEEEIIEEAVVIRKKPKKPFEPTVEDLEETEFSLSFKKPHTINEGVEEAATVLKKRPVKPTTLDEAAAELSIKRQEEEYEEGEDIEEFVVSQQRKPKPLQITEEDEEAYTVKKLKRRKQVDIPEYADVENVTFRARSTKTKEDVDQEFNIALDSYAEEEISMSGKVKLKKPIKKTFSEAADEAKIKIIQDFDDGEEPIIEEIRDDEDTIDEVEEPEEYFVEELPPDEVDFKLKPKKHPKPAYSVQDEEEEQFLIGIRHPKRDSVTYDEDSLTFKKKRKVVQQLFNEDGASLNITREMNVEESENLNIMYSICNYIADNNEAINLVEGEKVTVVGRHSSEWWYVKKSTTEEEGWVPAQYLMEPEEYAQYVQNKLHEKIDKLPVFERPGPEDKPIAPRFIEKLQPIHTPDGYTVQFECKVEGNPRPQIAWFRETAIIKPSQDFQMFYDDDNVATLIIREVFPEDAGQFTVVAKNAAGFTSSTTELIVESPLSDHGSDATALSRRSMSRESSLADILEGIPPTFSKKPKAQYVDENTNVILECRLVAVPEPDIVWTFNGEDIDEEEIKNVRIVTESDMHMYCSVVHISKVKKSQEGTYEVIATNREGEARLPITLKVRTTDKEAPQILEPLRNMVIREGESVVLSTQIVGNPPPKVTWYKDGKPVKNAKSDKDLHTLTLITPQKSEKGEYTVKAVNPLGSVETTANLTIEEPAGGNAEPPLFVERFEEQNVPQKGEIRLPAKVSGNPVPEVQWLFNNTPLFPSERIQQVYDGENIELIIKDANPETDSGDYKCIASNPIGKTSHGARVIVEVDEVTFTKKLKKTITIEEVQSLTLECETSHVVTTKWFFNGKELSGMDHRVVVEDGKTHKLVIRNTNLRDSGTYTCKVKKQETQSTVEVLQRKPDFIKVLEDYEVTEKDTAILDVELTTEATEVTWYKDGEKITPENKNVEFIKDGKARRLVIRDVTIHDEGQYTCKIEGQECSCELVVIELPPEIVEPLNDVAVTKGENAVFEVELSKGDALVKWFKNGKEIVFNERIQLAIDGKKQSLRIVKAKPEDVGEYSVQVGEQTSKAKLTVEEPLVDFVIRLPDITLATKTTDAEFTVQLSQPDVEVTWCKKGKPIKPNQKHEVFVEGTVRRLVIHDASDEDAGEISCVAENVTSSTKLCVEELKLPPVITSDKDQTIKVKENDDVTFTVKYTGVPTPEACWTTRKVVIPKSKRTIPTIDEQSAKLTIKKVVDDDEGEYTVKLVNPVGEAEASLHLVIMRKPTAPGTPQPLEIMHDSITLYWKAPEDDGKSEIIEYILEYQDVKEEKWTEIRKIKDTTYTISKLKIDTEYVFRSIAVNEVGPSPPSPLSPPIRLVPKVETKAPSVQEPLQDVVSELDKEVTLSCVFGGIPEPKVTWKKNGQVFESRSIRYENRVAKYTIEKTTIETEATYTCVATNEKGSAETSCRLKLQQKPVLEVEDKYLTQKLRTGSILTIPATVRGYPQPTVTWHKETIEQKTTKSVTIETTETTSTYTVKKVTREQSGKYKVTATNESGTTYVECTVQVIDKPSRPQSLEIKDIKKDSIVLEWTPPVDDGGLDIEKYTLEKCDVQNNVWMKVSDFNKDIKSYAVQKLSMNAQYMFRVVAANPIGESEPTESDPVTITKKFEKPSPPRGPTTVSGMNDTSFNLAWEPSETDGGSKIIEYIVEIREETETTYRSVGVTLGTVTNIHVEKVVRNKGYFFRIYARNEVGTSEAFETTEKIVLGRKITPPSPPQNLRAPDVTSRSVTLDWEVPARNGGSEITGYCVEKRSSTSTNWTKVITLDAHQLHYTIDNLKEKCEYWFRVSAENEVGLGAPAVTESISLKTHASEFILVVRNCGSYTEFGFLKAVPSPPTGPLEARVLAANAHIFEWGLPESDGGAPLLGYHIAIRDMKKTMWIEVGRVPAGVLKFQIRDLQENHEYMIRIFAKNEIGLSEPLESEEPYKAMTAGHESLPDEPRTEMSSCNTSSWLRDHHMDADIHSYARGRLLQRDEYFFRLWAELPKSKKKKSSK</sequence>